<sequence>MGEAGAAEEACRHMGTKEEFVKVRKKDLERLTTEVMQIRDFLPRILNGEVLESFQKLKIVEKNLERKEQELEQLKMDCEHFKARLETVQADNIREKKEKLALRQQLNEAKQQLLQQAEYCTEMGAAACTLLWGVSSSEEVVKAILGGDKALKFFSITGQTMESFVKSLDGDVQELDSDESQFVFALAGIVTNVAAIACGREFLVNSSRVLLDTILQLLGDLKPGQCTKLKVLMLMSLYNVSINLKGLKYISESPGFIPLLWWLLSDPDAEVCLHVLRLVQSVVLEPEVFSKSASEFRSSLPLQRILAMSKSRNPRLQTAAQELLEDLRTLEHNV</sequence>
<proteinExistence type="evidence at protein level"/>
<reference key="1">
    <citation type="journal article" date="1998" name="Gene">
        <title>Novel testis-specific protein that interacts with heat shock factor 2.</title>
        <authorList>
            <person name="Yoshima T."/>
            <person name="Yura T."/>
            <person name="Yanagi H."/>
        </authorList>
    </citation>
    <scope>NUCLEOTIDE SEQUENCE [MRNA] (ISOFORM 1)</scope>
    <scope>FUNCTION</scope>
    <scope>INTERACTION WITH HSF2</scope>
    <scope>TISSUE SPECIFICITY</scope>
    <source>
        <tissue>Testis</tissue>
    </source>
</reference>
<reference key="2">
    <citation type="journal article" date="2004" name="Nat. Genet.">
        <title>Complete sequencing and characterization of 21,243 full-length human cDNAs.</title>
        <authorList>
            <person name="Ota T."/>
            <person name="Suzuki Y."/>
            <person name="Nishikawa T."/>
            <person name="Otsuki T."/>
            <person name="Sugiyama T."/>
            <person name="Irie R."/>
            <person name="Wakamatsu A."/>
            <person name="Hayashi K."/>
            <person name="Sato H."/>
            <person name="Nagai K."/>
            <person name="Kimura K."/>
            <person name="Makita H."/>
            <person name="Sekine M."/>
            <person name="Obayashi M."/>
            <person name="Nishi T."/>
            <person name="Shibahara T."/>
            <person name="Tanaka T."/>
            <person name="Ishii S."/>
            <person name="Yamamoto J."/>
            <person name="Saito K."/>
            <person name="Kawai Y."/>
            <person name="Isono Y."/>
            <person name="Nakamura Y."/>
            <person name="Nagahari K."/>
            <person name="Murakami K."/>
            <person name="Yasuda T."/>
            <person name="Iwayanagi T."/>
            <person name="Wagatsuma M."/>
            <person name="Shiratori A."/>
            <person name="Sudo H."/>
            <person name="Hosoiri T."/>
            <person name="Kaku Y."/>
            <person name="Kodaira H."/>
            <person name="Kondo H."/>
            <person name="Sugawara M."/>
            <person name="Takahashi M."/>
            <person name="Kanda K."/>
            <person name="Yokoi T."/>
            <person name="Furuya T."/>
            <person name="Kikkawa E."/>
            <person name="Omura Y."/>
            <person name="Abe K."/>
            <person name="Kamihara K."/>
            <person name="Katsuta N."/>
            <person name="Sato K."/>
            <person name="Tanikawa M."/>
            <person name="Yamazaki M."/>
            <person name="Ninomiya K."/>
            <person name="Ishibashi T."/>
            <person name="Yamashita H."/>
            <person name="Murakawa K."/>
            <person name="Fujimori K."/>
            <person name="Tanai H."/>
            <person name="Kimata M."/>
            <person name="Watanabe M."/>
            <person name="Hiraoka S."/>
            <person name="Chiba Y."/>
            <person name="Ishida S."/>
            <person name="Ono Y."/>
            <person name="Takiguchi S."/>
            <person name="Watanabe S."/>
            <person name="Yosida M."/>
            <person name="Hotuta T."/>
            <person name="Kusano J."/>
            <person name="Kanehori K."/>
            <person name="Takahashi-Fujii A."/>
            <person name="Hara H."/>
            <person name="Tanase T.-O."/>
            <person name="Nomura Y."/>
            <person name="Togiya S."/>
            <person name="Komai F."/>
            <person name="Hara R."/>
            <person name="Takeuchi K."/>
            <person name="Arita M."/>
            <person name="Imose N."/>
            <person name="Musashino K."/>
            <person name="Yuuki H."/>
            <person name="Oshima A."/>
            <person name="Sasaki N."/>
            <person name="Aotsuka S."/>
            <person name="Yoshikawa Y."/>
            <person name="Matsunawa H."/>
            <person name="Ichihara T."/>
            <person name="Shiohata N."/>
            <person name="Sano S."/>
            <person name="Moriya S."/>
            <person name="Momiyama H."/>
            <person name="Satoh N."/>
            <person name="Takami S."/>
            <person name="Terashima Y."/>
            <person name="Suzuki O."/>
            <person name="Nakagawa S."/>
            <person name="Senoh A."/>
            <person name="Mizoguchi H."/>
            <person name="Goto Y."/>
            <person name="Shimizu F."/>
            <person name="Wakebe H."/>
            <person name="Hishigaki H."/>
            <person name="Watanabe T."/>
            <person name="Sugiyama A."/>
            <person name="Takemoto M."/>
            <person name="Kawakami B."/>
            <person name="Yamazaki M."/>
            <person name="Watanabe K."/>
            <person name="Kumagai A."/>
            <person name="Itakura S."/>
            <person name="Fukuzumi Y."/>
            <person name="Fujimori Y."/>
            <person name="Komiyama M."/>
            <person name="Tashiro H."/>
            <person name="Tanigami A."/>
            <person name="Fujiwara T."/>
            <person name="Ono T."/>
            <person name="Yamada K."/>
            <person name="Fujii Y."/>
            <person name="Ozaki K."/>
            <person name="Hirao M."/>
            <person name="Ohmori Y."/>
            <person name="Kawabata A."/>
            <person name="Hikiji T."/>
            <person name="Kobatake N."/>
            <person name="Inagaki H."/>
            <person name="Ikema Y."/>
            <person name="Okamoto S."/>
            <person name="Okitani R."/>
            <person name="Kawakami T."/>
            <person name="Noguchi S."/>
            <person name="Itoh T."/>
            <person name="Shigeta K."/>
            <person name="Senba T."/>
            <person name="Matsumura K."/>
            <person name="Nakajima Y."/>
            <person name="Mizuno T."/>
            <person name="Morinaga M."/>
            <person name="Sasaki M."/>
            <person name="Togashi T."/>
            <person name="Oyama M."/>
            <person name="Hata H."/>
            <person name="Watanabe M."/>
            <person name="Komatsu T."/>
            <person name="Mizushima-Sugano J."/>
            <person name="Satoh T."/>
            <person name="Shirai Y."/>
            <person name="Takahashi Y."/>
            <person name="Nakagawa K."/>
            <person name="Okumura K."/>
            <person name="Nagase T."/>
            <person name="Nomura N."/>
            <person name="Kikuchi H."/>
            <person name="Masuho Y."/>
            <person name="Yamashita R."/>
            <person name="Nakai K."/>
            <person name="Yada T."/>
            <person name="Nakamura Y."/>
            <person name="Ohara O."/>
            <person name="Isogai T."/>
            <person name="Sugano S."/>
        </authorList>
    </citation>
    <scope>NUCLEOTIDE SEQUENCE [LARGE SCALE MRNA] (ISOFORM 2)</scope>
    <source>
        <tissue>Testis</tissue>
    </source>
</reference>
<reference key="3">
    <citation type="journal article" date="2000" name="Nature">
        <title>The DNA sequence of human chromosome 21.</title>
        <authorList>
            <person name="Hattori M."/>
            <person name="Fujiyama A."/>
            <person name="Taylor T.D."/>
            <person name="Watanabe H."/>
            <person name="Yada T."/>
            <person name="Park H.-S."/>
            <person name="Toyoda A."/>
            <person name="Ishii K."/>
            <person name="Totoki Y."/>
            <person name="Choi D.-K."/>
            <person name="Groner Y."/>
            <person name="Soeda E."/>
            <person name="Ohki M."/>
            <person name="Takagi T."/>
            <person name="Sakaki Y."/>
            <person name="Taudien S."/>
            <person name="Blechschmidt K."/>
            <person name="Polley A."/>
            <person name="Menzel U."/>
            <person name="Delabar J."/>
            <person name="Kumpf K."/>
            <person name="Lehmann R."/>
            <person name="Patterson D."/>
            <person name="Reichwald K."/>
            <person name="Rump A."/>
            <person name="Schillhabel M."/>
            <person name="Schudy A."/>
            <person name="Zimmermann W."/>
            <person name="Rosenthal A."/>
            <person name="Kudoh J."/>
            <person name="Shibuya K."/>
            <person name="Kawasaki K."/>
            <person name="Asakawa S."/>
            <person name="Shintani A."/>
            <person name="Sasaki T."/>
            <person name="Nagamine K."/>
            <person name="Mitsuyama S."/>
            <person name="Antonarakis S.E."/>
            <person name="Minoshima S."/>
            <person name="Shimizu N."/>
            <person name="Nordsiek G."/>
            <person name="Hornischer K."/>
            <person name="Brandt P."/>
            <person name="Scharfe M."/>
            <person name="Schoen O."/>
            <person name="Desario A."/>
            <person name="Reichelt J."/>
            <person name="Kauer G."/>
            <person name="Bloecker H."/>
            <person name="Ramser J."/>
            <person name="Beck A."/>
            <person name="Klages S."/>
            <person name="Hennig S."/>
            <person name="Riesselmann L."/>
            <person name="Dagand E."/>
            <person name="Wehrmeyer S."/>
            <person name="Borzym K."/>
            <person name="Gardiner K."/>
            <person name="Nizetic D."/>
            <person name="Francis F."/>
            <person name="Lehrach H."/>
            <person name="Reinhardt R."/>
            <person name="Yaspo M.-L."/>
        </authorList>
    </citation>
    <scope>NUCLEOTIDE SEQUENCE [LARGE SCALE GENOMIC DNA]</scope>
</reference>
<reference key="4">
    <citation type="journal article" date="2004" name="Genome Res.">
        <title>The status, quality, and expansion of the NIH full-length cDNA project: the Mammalian Gene Collection (MGC).</title>
        <authorList>
            <consortium name="The MGC Project Team"/>
        </authorList>
    </citation>
    <scope>NUCLEOTIDE SEQUENCE [LARGE SCALE MRNA] (ISOFORM 1)</scope>
    <source>
        <tissue>Cervix</tissue>
    </source>
</reference>
<reference key="5">
    <citation type="journal article" date="2007" name="Nucleic Acids Res.">
        <title>Ubc9 fusion-directed SUMOylation identifies constitutive and inducible SUMOylation.</title>
        <authorList>
            <person name="Jakobs A."/>
            <person name="Himstedt F."/>
            <person name="Funk M."/>
            <person name="Korn B."/>
            <person name="Gaestel M."/>
            <person name="Niedenthal R."/>
        </authorList>
    </citation>
    <scope>SUMOYLATION</scope>
</reference>
<reference key="6">
    <citation type="journal article" date="2019" name="Cell Rep.">
        <title>HSF2BP Interacts with a Conserved Domain of BRCA2 and Is Required for Mouse Spermatogenesis.</title>
        <authorList>
            <person name="Brandsma I."/>
            <person name="Sato K."/>
            <person name="van Rossum-Fikkert S.E."/>
            <person name="van Vliet N."/>
            <person name="Sleddens E."/>
            <person name="Reuter M."/>
            <person name="Odijk H."/>
            <person name="van den Tempel N."/>
            <person name="Dekkers D.H.W."/>
            <person name="Bezstarosti K."/>
            <person name="Demmers J.A.A."/>
            <person name="Maas A."/>
            <person name="Lebbink J."/>
            <person name="Wyman C."/>
            <person name="Essers J."/>
            <person name="van Gent D.C."/>
            <person name="Baarends W.M."/>
            <person name="Knipscheer P."/>
            <person name="Kanaar R."/>
            <person name="Zelensky A.N."/>
        </authorList>
    </citation>
    <scope>FUNCTION</scope>
    <scope>INTERACTION WITH BRCA2</scope>
    <scope>MUTAGENESIS OF ARG-200</scope>
    <scope>SUBCELLULAR LOCATION</scope>
    <scope>TISSUE SPECIFICITY</scope>
</reference>
<reference key="7">
    <citation type="journal article" date="2020" name="Elife">
        <title>A missense in HSF2BP causing primary ovarian insufficiency affects meiotic recombination by its novel interactor C19ORF57/BRME1.</title>
        <authorList>
            <person name="Felipe-Medina N."/>
            <person name="Caburet S."/>
            <person name="Sanchez-Saez F."/>
            <person name="Condezo Y.B."/>
            <person name="de Rooij D.G."/>
            <person name="Gomez-H L."/>
            <person name="Garcia-Valiente R."/>
            <person name="Todeschini A.L."/>
            <person name="Duque P."/>
            <person name="Sanchez-Martin M.A."/>
            <person name="Shalev S.A."/>
            <person name="Llano E."/>
            <person name="Veitia R.A."/>
            <person name="Pendas A.M."/>
        </authorList>
    </citation>
    <scope>VARIANT POF19 LEU-167</scope>
    <scope>CHARACTERIZATION OF VARIANT POF19 LEU-167</scope>
    <scope>INVOLVEMENT IN POF19</scope>
</reference>
<accession>O75031</accession>
<accession>B4DX36</accession>
<protein>
    <recommendedName>
        <fullName evidence="8">Heat shock factor 2-binding protein</fullName>
    </recommendedName>
</protein>
<dbReference type="EMBL" id="AB007131">
    <property type="protein sequence ID" value="BAA31967.1"/>
    <property type="molecule type" value="mRNA"/>
</dbReference>
<dbReference type="EMBL" id="AK301795">
    <property type="protein sequence ID" value="BAG63248.1"/>
    <property type="molecule type" value="mRNA"/>
</dbReference>
<dbReference type="EMBL" id="AP001050">
    <property type="status" value="NOT_ANNOTATED_CDS"/>
    <property type="molecule type" value="Genomic_DNA"/>
</dbReference>
<dbReference type="EMBL" id="AP001751">
    <property type="protein sequence ID" value="BAA95537.1"/>
    <property type="molecule type" value="Genomic_DNA"/>
</dbReference>
<dbReference type="EMBL" id="AP001752">
    <property type="protein sequence ID" value="BAA95539.1"/>
    <property type="molecule type" value="Genomic_DNA"/>
</dbReference>
<dbReference type="EMBL" id="BC000153">
    <property type="protein sequence ID" value="AAH00153.1"/>
    <property type="molecule type" value="mRNA"/>
</dbReference>
<dbReference type="CCDS" id="CCDS13697.1">
    <molecule id="O75031-1"/>
</dbReference>
<dbReference type="RefSeq" id="NP_008962.1">
    <molecule id="O75031-1"/>
    <property type="nucleotide sequence ID" value="NM_007031.2"/>
</dbReference>
<dbReference type="RefSeq" id="XP_011527748.1">
    <property type="nucleotide sequence ID" value="XM_011529446.2"/>
</dbReference>
<dbReference type="RefSeq" id="XP_047296632.1">
    <molecule id="O75031-1"/>
    <property type="nucleotide sequence ID" value="XM_047440676.1"/>
</dbReference>
<dbReference type="RefSeq" id="XP_047302980.1">
    <molecule id="O75031-1"/>
    <property type="nucleotide sequence ID" value="XM_047447024.1"/>
</dbReference>
<dbReference type="PDB" id="7BDX">
    <property type="method" value="X-ray"/>
    <property type="resolution" value="2.60 A"/>
    <property type="chains" value="A/B/C/D=122-334"/>
</dbReference>
<dbReference type="PDB" id="7LDG">
    <property type="method" value="X-ray"/>
    <property type="resolution" value="2.56 A"/>
    <property type="chains" value="A/C=83-334"/>
</dbReference>
<dbReference type="PDB" id="8A50">
    <property type="method" value="X-ray"/>
    <property type="resolution" value="1.48 A"/>
    <property type="chains" value="A/B=19-50"/>
</dbReference>
<dbReference type="PDB" id="8A51">
    <property type="method" value="X-ray"/>
    <property type="resolution" value="1.90 A"/>
    <property type="chains" value="A=19-50"/>
</dbReference>
<dbReference type="PDBsum" id="7BDX"/>
<dbReference type="PDBsum" id="7LDG"/>
<dbReference type="PDBsum" id="8A50"/>
<dbReference type="PDBsum" id="8A51"/>
<dbReference type="EMDB" id="EMD-16432"/>
<dbReference type="SASBDB" id="O75031"/>
<dbReference type="SMR" id="O75031"/>
<dbReference type="BioGRID" id="116260">
    <property type="interactions" value="318"/>
</dbReference>
<dbReference type="FunCoup" id="O75031">
    <property type="interactions" value="422"/>
</dbReference>
<dbReference type="IntAct" id="O75031">
    <property type="interactions" value="302"/>
</dbReference>
<dbReference type="MINT" id="O75031"/>
<dbReference type="STRING" id="9606.ENSP00000291560"/>
<dbReference type="iPTMnet" id="O75031"/>
<dbReference type="PhosphoSitePlus" id="O75031"/>
<dbReference type="BioMuta" id="HSF2BP"/>
<dbReference type="jPOST" id="O75031"/>
<dbReference type="MassIVE" id="O75031"/>
<dbReference type="PaxDb" id="9606-ENSP00000291560"/>
<dbReference type="PeptideAtlas" id="O75031"/>
<dbReference type="ProteomicsDB" id="49714">
    <molecule id="O75031-1"/>
</dbReference>
<dbReference type="ProteomicsDB" id="5404"/>
<dbReference type="Antibodypedia" id="9965">
    <property type="antibodies" value="113 antibodies from 22 providers"/>
</dbReference>
<dbReference type="DNASU" id="11077"/>
<dbReference type="Ensembl" id="ENST00000291560.7">
    <molecule id="O75031-1"/>
    <property type="protein sequence ID" value="ENSP00000291560.2"/>
    <property type="gene ID" value="ENSG00000160207.9"/>
</dbReference>
<dbReference type="GeneID" id="11077"/>
<dbReference type="KEGG" id="hsa:11077"/>
<dbReference type="MANE-Select" id="ENST00000291560.7">
    <property type="protein sequence ID" value="ENSP00000291560.2"/>
    <property type="RefSeq nucleotide sequence ID" value="NM_007031.2"/>
    <property type="RefSeq protein sequence ID" value="NP_008962.1"/>
</dbReference>
<dbReference type="AGR" id="HGNC:5226"/>
<dbReference type="CTD" id="11077"/>
<dbReference type="DisGeNET" id="11077"/>
<dbReference type="GeneCards" id="HSF2BP"/>
<dbReference type="HGNC" id="HGNC:5226">
    <property type="gene designation" value="HSF2BP"/>
</dbReference>
<dbReference type="HPA" id="ENSG00000160207">
    <property type="expression patterns" value="Tissue enriched (testis)"/>
</dbReference>
<dbReference type="MalaCards" id="HSF2BP"/>
<dbReference type="MIM" id="604554">
    <property type="type" value="gene"/>
</dbReference>
<dbReference type="MIM" id="619245">
    <property type="type" value="phenotype"/>
</dbReference>
<dbReference type="neXtProt" id="NX_O75031"/>
<dbReference type="OpenTargets" id="ENSG00000160207"/>
<dbReference type="PharmGKB" id="PA29495"/>
<dbReference type="VEuPathDB" id="HostDB:ENSG00000160207"/>
<dbReference type="eggNOG" id="ENOG502QSZY">
    <property type="taxonomic scope" value="Eukaryota"/>
</dbReference>
<dbReference type="GeneTree" id="ENSGT00390000008490"/>
<dbReference type="InParanoid" id="O75031"/>
<dbReference type="OMA" id="CTEMGAT"/>
<dbReference type="OrthoDB" id="10065854at2759"/>
<dbReference type="PAN-GO" id="O75031">
    <property type="GO annotations" value="0 GO annotations based on evolutionary models"/>
</dbReference>
<dbReference type="PhylomeDB" id="O75031"/>
<dbReference type="TreeFam" id="TF331782"/>
<dbReference type="PathwayCommons" id="O75031"/>
<dbReference type="SignaLink" id="O75031"/>
<dbReference type="BioGRID-ORCS" id="11077">
    <property type="hits" value="17 hits in 1152 CRISPR screens"/>
</dbReference>
<dbReference type="ChiTaRS" id="HSF2BP">
    <property type="organism name" value="human"/>
</dbReference>
<dbReference type="GenomeRNAi" id="11077"/>
<dbReference type="Pharos" id="O75031">
    <property type="development level" value="Tbio"/>
</dbReference>
<dbReference type="PRO" id="PR:O75031"/>
<dbReference type="Proteomes" id="UP000005640">
    <property type="component" value="Chromosome 21"/>
</dbReference>
<dbReference type="RNAct" id="O75031">
    <property type="molecule type" value="protein"/>
</dbReference>
<dbReference type="Bgee" id="ENSG00000160207">
    <property type="expression patterns" value="Expressed in primordial germ cell in gonad and 100 other cell types or tissues"/>
</dbReference>
<dbReference type="ExpressionAtlas" id="O75031">
    <property type="expression patterns" value="baseline and differential"/>
</dbReference>
<dbReference type="GO" id="GO:0005694">
    <property type="term" value="C:chromosome"/>
    <property type="evidence" value="ECO:0000314"/>
    <property type="project" value="UniProtKB"/>
</dbReference>
<dbReference type="GO" id="GO:0005829">
    <property type="term" value="C:cytosol"/>
    <property type="evidence" value="ECO:0000314"/>
    <property type="project" value="HPA"/>
</dbReference>
<dbReference type="GO" id="GO:0005654">
    <property type="term" value="C:nucleoplasm"/>
    <property type="evidence" value="ECO:0000314"/>
    <property type="project" value="HPA"/>
</dbReference>
<dbReference type="GO" id="GO:1990918">
    <property type="term" value="P:double-strand break repair involved in meiotic recombination"/>
    <property type="evidence" value="ECO:0000250"/>
    <property type="project" value="UniProtKB"/>
</dbReference>
<dbReference type="GO" id="GO:0007144">
    <property type="term" value="P:female meiosis I"/>
    <property type="evidence" value="ECO:0000250"/>
    <property type="project" value="UniProtKB"/>
</dbReference>
<dbReference type="GO" id="GO:0007141">
    <property type="term" value="P:male meiosis I"/>
    <property type="evidence" value="ECO:0000250"/>
    <property type="project" value="UniProtKB"/>
</dbReference>
<dbReference type="GO" id="GO:0007283">
    <property type="term" value="P:spermatogenesis"/>
    <property type="evidence" value="ECO:0000250"/>
    <property type="project" value="UniProtKB"/>
</dbReference>
<dbReference type="GO" id="GO:0006366">
    <property type="term" value="P:transcription by RNA polymerase II"/>
    <property type="evidence" value="ECO:0000304"/>
    <property type="project" value="ProtInc"/>
</dbReference>
<dbReference type="FunFam" id="1.25.10.10:FF:000301">
    <property type="entry name" value="Heat shock transcription factor 2 binding protein"/>
    <property type="match status" value="1"/>
</dbReference>
<dbReference type="Gene3D" id="1.25.10.10">
    <property type="entry name" value="Leucine-rich Repeat Variant"/>
    <property type="match status" value="1"/>
</dbReference>
<dbReference type="InterPro" id="IPR011989">
    <property type="entry name" value="ARM-like"/>
</dbReference>
<dbReference type="InterPro" id="IPR016024">
    <property type="entry name" value="ARM-type_fold"/>
</dbReference>
<dbReference type="InterPro" id="IPR039584">
    <property type="entry name" value="HSF2BP"/>
</dbReference>
<dbReference type="PANTHER" id="PTHR15434">
    <property type="entry name" value="HEAT SHOCK FACTOR 2-BINDING PROTEIN"/>
    <property type="match status" value="1"/>
</dbReference>
<dbReference type="PANTHER" id="PTHR15434:SF2">
    <property type="entry name" value="HEAT SHOCK FACTOR 2-BINDING PROTEIN"/>
    <property type="match status" value="1"/>
</dbReference>
<dbReference type="SUPFAM" id="SSF48371">
    <property type="entry name" value="ARM repeat"/>
    <property type="match status" value="1"/>
</dbReference>
<comment type="function">
    <text evidence="1 4 6">Meiotic recombination factor component of recombination bridges involved in meiotic double-strand break repair. Modulates the localization of recombinases DMC1:RAD51 to meiotic double-strand break (DSB) sites through the interaction with BRCA2 and its recruitment during meiotic recombination (By similarity) (PubMed:31242413). Indispensable for the DSB repair, homologous synapsis, and crossover formation that are needed for progression past metaphase I, is essential for spermatogenesis and male fertility (By similarity). Required for proper recombinase recruitment in female meiosis (By similarity). Inhibits BNC1 transcriptional activity during spermatogenesis, probably by sequestering it in the cytoplasm (By similarity). May be involved in modulating HSF2 activation in testis (PubMed:9651507).</text>
</comment>
<comment type="subunit">
    <text evidence="1 4 6">Associates with HSF2 (PubMed:9651507). The interaction seems to occur between the trimerization domain of HSF2 and the N-terminal hydrophilic region of HSF2BP (PubMed:9651507). Interacts (via C-terminus) with BNC1 (By similarity). Interacts (via N-terminus) with BRCA2 and BRME1; the interactions are direct and allow the formation of a ternary complex. The complex BRME1:HSF2BP:BRCA2 interacts with SPATA22, MEIOB and RAD51 (By similarity) (PubMed:31242413).</text>
</comment>
<comment type="interaction">
    <interactant intactId="EBI-7116203">
        <id>O75031</id>
    </interactant>
    <interactant intactId="EBI-11096309">
        <id>Q9NYB9-2</id>
        <label>ABI2</label>
    </interactant>
    <organismsDiffer>false</organismsDiffer>
    <experiments>3</experiments>
</comment>
<comment type="interaction">
    <interactant intactId="EBI-7116203">
        <id>O75031</id>
    </interactant>
    <interactant intactId="EBI-11030084">
        <id>O14639-4</id>
        <label>ABLIM1</label>
    </interactant>
    <organismsDiffer>false</organismsDiffer>
    <experiments>3</experiments>
</comment>
<comment type="interaction">
    <interactant intactId="EBI-7116203">
        <id>O75031</id>
    </interactant>
    <interactant intactId="EBI-2880652">
        <id>Q08043</id>
        <label>ACTN3</label>
    </interactant>
    <organismsDiffer>false</organismsDiffer>
    <experiments>3</experiments>
</comment>
<comment type="interaction">
    <interactant intactId="EBI-7116203">
        <id>O75031</id>
    </interactant>
    <interactant intactId="EBI-9089447">
        <id>Q96D30</id>
        <label>ADD1</label>
    </interactant>
    <organismsDiffer>false</organismsDiffer>
    <experiments>3</experiments>
</comment>
<comment type="interaction">
    <interactant intactId="EBI-7116203">
        <id>O75031</id>
    </interactant>
    <interactant intactId="EBI-2555937">
        <id>Q96DE5</id>
        <label>ANAPC16</label>
    </interactant>
    <organismsDiffer>false</organismsDiffer>
    <experiments>3</experiments>
</comment>
<comment type="interaction">
    <interactant intactId="EBI-7116203">
        <id>O75031</id>
    </interactant>
    <interactant intactId="EBI-14493093">
        <id>Q3KP44</id>
        <label>ANKRD55</label>
    </interactant>
    <organismsDiffer>false</organismsDiffer>
    <experiments>3</experiments>
</comment>
<comment type="interaction">
    <interactant intactId="EBI-7116203">
        <id>O75031</id>
    </interactant>
    <interactant intactId="EBI-17714371">
        <id>Q7Z6G8-3</id>
        <label>ANKS1B</label>
    </interactant>
    <organismsDiffer>false</organismsDiffer>
    <experiments>3</experiments>
</comment>
<comment type="interaction">
    <interactant intactId="EBI-7116203">
        <id>O75031</id>
    </interactant>
    <interactant intactId="EBI-2825900">
        <id>Q92619</id>
        <label>ARHGAP45</label>
    </interactant>
    <organismsDiffer>false</organismsDiffer>
    <experiments>3</experiments>
</comment>
<comment type="interaction">
    <interactant intactId="EBI-7116203">
        <id>O75031</id>
    </interactant>
    <interactant intactId="EBI-10312733">
        <id>Q9NR81</id>
        <label>ARHGEF3</label>
    </interactant>
    <organismsDiffer>false</organismsDiffer>
    <experiments>3</experiments>
</comment>
<comment type="interaction">
    <interactant intactId="EBI-7116203">
        <id>O75031</id>
    </interactant>
    <interactant intactId="EBI-3389984">
        <id>Q9NR80</id>
        <label>ARHGEF4</label>
    </interactant>
    <organismsDiffer>false</organismsDiffer>
    <experiments>3</experiments>
</comment>
<comment type="interaction">
    <interactant intactId="EBI-7116203">
        <id>O75031</id>
    </interactant>
    <interactant intactId="EBI-602199">
        <id>Q12774</id>
        <label>ARHGEF5</label>
    </interactant>
    <organismsDiffer>false</organismsDiffer>
    <experiments>3</experiments>
</comment>
<comment type="interaction">
    <interactant intactId="EBI-7116203">
        <id>O75031</id>
    </interactant>
    <interactant intactId="EBI-1642523">
        <id>Q15052</id>
        <label>ARHGEF6</label>
    </interactant>
    <organismsDiffer>false</organismsDiffer>
    <experiments>3</experiments>
</comment>
<comment type="interaction">
    <interactant intactId="EBI-7116203">
        <id>O75031</id>
    </interactant>
    <interactant intactId="EBI-745689">
        <id>Q7L5A3</id>
        <label>ATOSB</label>
    </interactant>
    <organismsDiffer>false</organismsDiffer>
    <experiments>3</experiments>
</comment>
<comment type="interaction">
    <interactant intactId="EBI-7116203">
        <id>O75031</id>
    </interactant>
    <interactant intactId="EBI-473181">
        <id>Q99728</id>
        <label>BARD1</label>
    </interactant>
    <organismsDiffer>false</organismsDiffer>
    <experiments>3</experiments>
</comment>
<comment type="interaction">
    <interactant intactId="EBI-7116203">
        <id>O75031</id>
    </interactant>
    <interactant intactId="EBI-516580">
        <id>Q07812</id>
        <label>BAX</label>
    </interactant>
    <organismsDiffer>false</organismsDiffer>
    <experiments>3</experiments>
</comment>
<comment type="interaction">
    <interactant intactId="EBI-7116203">
        <id>O75031</id>
    </interactant>
    <interactant intactId="EBI-741542">
        <id>Q9UIF8</id>
        <label>BAZ2B</label>
    </interactant>
    <organismsDiffer>false</organismsDiffer>
    <experiments>3</experiments>
</comment>
<comment type="interaction">
    <interactant intactId="EBI-7116203">
        <id>O75031</id>
    </interactant>
    <interactant intactId="EBI-1050106">
        <id>O75934</id>
        <label>BCAS2</label>
    </interactant>
    <organismsDiffer>false</organismsDiffer>
    <experiments>3</experiments>
</comment>
<comment type="interaction">
    <interactant intactId="EBI-7116203">
        <id>O75031</id>
    </interactant>
    <interactant intactId="EBI-10181188">
        <id>Q8N7W2-2</id>
        <label>BEND7</label>
    </interactant>
    <organismsDiffer>false</organismsDiffer>
    <experiments>5</experiments>
</comment>
<comment type="interaction">
    <interactant intactId="EBI-7116203">
        <id>O75031</id>
    </interactant>
    <interactant intactId="EBI-745073">
        <id>Q9BXY8</id>
        <label>BEX2</label>
    </interactant>
    <organismsDiffer>false</organismsDiffer>
    <experiments>3</experiments>
</comment>
<comment type="interaction">
    <interactant intactId="EBI-7116203">
        <id>O75031</id>
    </interactant>
    <interactant intactId="EBI-2105445">
        <id>P51451</id>
        <label>BLK</label>
    </interactant>
    <organismsDiffer>false</organismsDiffer>
    <experiments>3</experiments>
</comment>
<comment type="interaction">
    <interactant intactId="EBI-7116203">
        <id>O75031</id>
    </interactant>
    <interactant intactId="EBI-2341576">
        <id>P35226</id>
        <label>BMI1</label>
    </interactant>
    <organismsDiffer>false</organismsDiffer>
    <experiments>3</experiments>
</comment>
<comment type="interaction">
    <interactant intactId="EBI-7116203">
        <id>O75031</id>
    </interactant>
    <interactant intactId="EBI-358049">
        <id>Q13895</id>
        <label>BYSL</label>
    </interactant>
    <organismsDiffer>false</organismsDiffer>
    <experiments>3</experiments>
</comment>
<comment type="interaction">
    <interactant intactId="EBI-7116203">
        <id>O75031</id>
    </interactant>
    <interactant intactId="EBI-946029">
        <id>Q6P1W5</id>
        <label>C1orf94</label>
    </interactant>
    <organismsDiffer>false</organismsDiffer>
    <experiments>3</experiments>
</comment>
<comment type="interaction">
    <interactant intactId="EBI-7116203">
        <id>O75031</id>
    </interactant>
    <interactant intactId="EBI-739879">
        <id>Q53TS8</id>
        <label>C2CD6</label>
    </interactant>
    <organismsDiffer>false</organismsDiffer>
    <experiments>3</experiments>
</comment>
<comment type="interaction">
    <interactant intactId="EBI-7116203">
        <id>O75031</id>
    </interactant>
    <interactant intactId="EBI-6657981">
        <id>Q504U0</id>
        <label>C4orf46</label>
    </interactant>
    <organismsDiffer>false</organismsDiffer>
    <experiments>3</experiments>
</comment>
<comment type="interaction">
    <interactant intactId="EBI-7116203">
        <id>O75031</id>
    </interactant>
    <interactant intactId="EBI-18121830">
        <id>Q9P1Y5-2</id>
        <label>CAMSAP3</label>
    </interactant>
    <organismsDiffer>false</organismsDiffer>
    <experiments>3</experiments>
</comment>
<comment type="interaction">
    <interactant intactId="EBI-7116203">
        <id>O75031</id>
    </interactant>
    <interactant intactId="EBI-11530605">
        <id>Q9H257-2</id>
        <label>CARD9</label>
    </interactant>
    <organismsDiffer>false</organismsDiffer>
    <experiments>3</experiments>
</comment>
<comment type="interaction">
    <interactant intactId="EBI-7116203">
        <id>O75031</id>
    </interactant>
    <interactant intactId="EBI-12270182">
        <id>Q9NQ75-2</id>
        <label>CASS4</label>
    </interactant>
    <organismsDiffer>false</organismsDiffer>
    <experiments>3</experiments>
</comment>
<comment type="interaction">
    <interactant intactId="EBI-7116203">
        <id>O75031</id>
    </interactant>
    <interactant intactId="EBI-712912">
        <id>Q9HC52</id>
        <label>CBX8</label>
    </interactant>
    <organismsDiffer>false</organismsDiffer>
    <experiments>3</experiments>
</comment>
<comment type="interaction">
    <interactant intactId="EBI-7116203">
        <id>O75031</id>
    </interactant>
    <interactant intactId="EBI-11524851">
        <id>Q8NA61-2</id>
        <label>CBY2</label>
    </interactant>
    <organismsDiffer>false</organismsDiffer>
    <experiments>3</experiments>
</comment>
<comment type="interaction">
    <interactant intactId="EBI-7116203">
        <id>O75031</id>
    </interactant>
    <interactant intactId="EBI-744311">
        <id>Q8IYX3</id>
        <label>CCDC116</label>
    </interactant>
    <organismsDiffer>false</organismsDiffer>
    <experiments>3</experiments>
</comment>
<comment type="interaction">
    <interactant intactId="EBI-7116203">
        <id>O75031</id>
    </interactant>
    <interactant intactId="EBI-744556">
        <id>Q96HB5</id>
        <label>CCDC120</label>
    </interactant>
    <organismsDiffer>false</organismsDiffer>
    <experiments>3</experiments>
</comment>
<comment type="interaction">
    <interactant intactId="EBI-7116203">
        <id>O75031</id>
    </interactant>
    <interactant intactId="EBI-10961312">
        <id>Q8IYE1</id>
        <label>CCDC13</label>
    </interactant>
    <organismsDiffer>false</organismsDiffer>
    <experiments>3</experiments>
</comment>
<comment type="interaction">
    <interactant intactId="EBI-7116203">
        <id>O75031</id>
    </interactant>
    <interactant intactId="EBI-10749669">
        <id>Q8IYE0</id>
        <label>CCDC146</label>
    </interactant>
    <organismsDiffer>false</organismsDiffer>
    <experiments>3</experiments>
</comment>
<comment type="interaction">
    <interactant intactId="EBI-7116203">
        <id>O75031</id>
    </interactant>
    <interactant intactId="EBI-740814">
        <id>Q8N715</id>
        <label>CCDC185</label>
    </interactant>
    <organismsDiffer>false</organismsDiffer>
    <experiments>3</experiments>
</comment>
<comment type="interaction">
    <interactant intactId="EBI-7116203">
        <id>O75031</id>
    </interactant>
    <interactant intactId="EBI-11748295">
        <id>E9PSE9</id>
        <label>CCDC198</label>
    </interactant>
    <organismsDiffer>false</organismsDiffer>
    <experiments>3</experiments>
</comment>
<comment type="interaction">
    <interactant intactId="EBI-7116203">
        <id>O75031</id>
    </interactant>
    <interactant intactId="EBI-10175300">
        <id>Q8TD31-3</id>
        <label>CCHCR1</label>
    </interactant>
    <organismsDiffer>false</organismsDiffer>
    <experiments>3</experiments>
</comment>
<comment type="interaction">
    <interactant intactId="EBI-7116203">
        <id>O75031</id>
    </interactant>
    <interactant intactId="EBI-17793327">
        <id>Q9C0I3-2</id>
        <label>CCSER1</label>
    </interactant>
    <organismsDiffer>false</organismsDiffer>
    <experiments>3</experiments>
</comment>
<comment type="interaction">
    <interactant intactId="EBI-7116203">
        <id>O75031</id>
    </interactant>
    <interactant intactId="EBI-295634">
        <id>Q16543</id>
        <label>CDC37</label>
    </interactant>
    <organismsDiffer>false</organismsDiffer>
    <experiments>3</experiments>
</comment>
<comment type="interaction">
    <interactant intactId="EBI-7116203">
        <id>O75031</id>
    </interactant>
    <interactant intactId="EBI-930143">
        <id>Q6P1J9</id>
        <label>CDC73</label>
    </interactant>
    <organismsDiffer>false</organismsDiffer>
    <experiments>4</experiments>
</comment>
<comment type="interaction">
    <interactant intactId="EBI-7116203">
        <id>O75031</id>
    </interactant>
    <interactant intactId="EBI-5278764">
        <id>Q96GN5</id>
        <label>CDCA7L</label>
    </interactant>
    <organismsDiffer>false</organismsDiffer>
    <experiments>3</experiments>
</comment>
<comment type="interaction">
    <interactant intactId="EBI-7116203">
        <id>O75031</id>
    </interactant>
    <interactant intactId="EBI-11063830">
        <id>Q86X02</id>
        <label>CDR2L</label>
    </interactant>
    <organismsDiffer>false</organismsDiffer>
    <experiments>3</experiments>
</comment>
<comment type="interaction">
    <interactant intactId="EBI-7116203">
        <id>O75031</id>
    </interactant>
    <interactant intactId="EBI-8467076">
        <id>Q8N8U2</id>
        <label>CDYL2</label>
    </interactant>
    <organismsDiffer>false</organismsDiffer>
    <experiments>3</experiments>
</comment>
<comment type="interaction">
    <interactant intactId="EBI-7116203">
        <id>O75031</id>
    </interactant>
    <interactant intactId="EBI-747776">
        <id>Q53EZ4</id>
        <label>CEP55</label>
    </interactant>
    <organismsDiffer>false</organismsDiffer>
    <experiments>3</experiments>
</comment>
<comment type="interaction">
    <interactant intactId="EBI-7116203">
        <id>O75031</id>
    </interactant>
    <interactant intactId="EBI-11752486">
        <id>Q86XR8-3</id>
        <label>CEP57</label>
    </interactant>
    <organismsDiffer>false</organismsDiffer>
    <experiments>6</experiments>
</comment>
<comment type="interaction">
    <interactant intactId="EBI-7116203">
        <id>O75031</id>
    </interactant>
    <interactant intactId="EBI-715690">
        <id>Q9H0I3</id>
        <label>CFAP263</label>
    </interactant>
    <organismsDiffer>false</organismsDiffer>
    <experiments>3</experiments>
</comment>
<comment type="interaction">
    <interactant intactId="EBI-7116203">
        <id>O75031</id>
    </interactant>
    <interactant intactId="EBI-12039847">
        <id>A4QMS7</id>
        <label>CFAP90</label>
    </interactant>
    <organismsDiffer>false</organismsDiffer>
    <experiments>3</experiments>
</comment>
<comment type="interaction">
    <interactant intactId="EBI-7116203">
        <id>O75031</id>
    </interactant>
    <interactant intactId="EBI-12010090">
        <id>A8MYP8</id>
        <label>CIMAP1B</label>
    </interactant>
    <organismsDiffer>false</organismsDiffer>
    <experiments>3</experiments>
</comment>
<comment type="interaction">
    <interactant intactId="EBI-7116203">
        <id>O75031</id>
    </interactant>
    <interactant intactId="EBI-6660184">
        <id>Q3SX64</id>
        <label>CIMAP1D</label>
    </interactant>
    <organismsDiffer>false</organismsDiffer>
    <experiments>3</experiments>
</comment>
<comment type="interaction">
    <interactant intactId="EBI-7116203">
        <id>O75031</id>
    </interactant>
    <interactant intactId="EBI-456371">
        <id>P61024</id>
        <label>CKS1B</label>
    </interactant>
    <organismsDiffer>false</organismsDiffer>
    <experiments>3</experiments>
</comment>
<comment type="interaction">
    <interactant intactId="EBI-7116203">
        <id>O75031</id>
    </interactant>
    <interactant intactId="EBI-5655540">
        <id>Q8N3C7</id>
        <label>CLIP4</label>
    </interactant>
    <organismsDiffer>false</organismsDiffer>
    <experiments>3</experiments>
</comment>
<comment type="interaction">
    <interactant intactId="EBI-7116203">
        <id>O75031</id>
    </interactant>
    <interactant intactId="EBI-11986439">
        <id>Q9NRU3</id>
        <label>CNNM1</label>
    </interactant>
    <organismsDiffer>false</organismsDiffer>
    <experiments>6</experiments>
</comment>
<comment type="interaction">
    <interactant intactId="EBI-7116203">
        <id>O75031</id>
    </interactant>
    <interactant intactId="EBI-741032">
        <id>Q8NE01</id>
        <label>CNNM3</label>
    </interactant>
    <organismsDiffer>false</organismsDiffer>
    <experiments>3</experiments>
</comment>
<comment type="interaction">
    <interactant intactId="EBI-7116203">
        <id>O75031</id>
    </interactant>
    <interactant intactId="EBI-743033">
        <id>Q9NZN8</id>
        <label>CNOT2</label>
    </interactant>
    <organismsDiffer>false</organismsDiffer>
    <experiments>3</experiments>
</comment>
<comment type="interaction">
    <interactant intactId="EBI-7116203">
        <id>O75031</id>
    </interactant>
    <interactant intactId="EBI-945751">
        <id>P38432</id>
        <label>COIL</label>
    </interactant>
    <organismsDiffer>false</organismsDiffer>
    <experiments>3</experiments>
</comment>
<comment type="interaction">
    <interactant intactId="EBI-7116203">
        <id>O75031</id>
    </interactant>
    <interactant intactId="EBI-8636823">
        <id>Q9UBR2</id>
        <label>CTSZ</label>
    </interactant>
    <organismsDiffer>false</organismsDiffer>
    <experiments>3</experiments>
</comment>
<comment type="interaction">
    <interactant intactId="EBI-7116203">
        <id>O75031</id>
    </interactant>
    <interactant intactId="EBI-1774260">
        <id>Q8WZ74</id>
        <label>CTTNBP2</label>
    </interactant>
    <organismsDiffer>false</organismsDiffer>
    <experiments>3</experiments>
</comment>
<comment type="interaction">
    <interactant intactId="EBI-7116203">
        <id>O75031</id>
    </interactant>
    <interactant intactId="EBI-1774273">
        <id>Q9P2B4</id>
        <label>CTTNBP2NL</label>
    </interactant>
    <organismsDiffer>false</organismsDiffer>
    <experiments>3</experiments>
</comment>
<comment type="interaction">
    <interactant intactId="EBI-7116203">
        <id>O75031</id>
    </interactant>
    <interactant intactId="EBI-5453285">
        <id>Q2TBE0</id>
        <label>CWF19L2</label>
    </interactant>
    <organismsDiffer>false</organismsDiffer>
    <experiments>3</experiments>
</comment>
<comment type="interaction">
    <interactant intactId="EBI-7116203">
        <id>O75031</id>
    </interactant>
    <interactant intactId="EBI-9090939">
        <id>Q5D0E6-2</id>
        <label>DALRD3</label>
    </interactant>
    <organismsDiffer>false</organismsDiffer>
    <experiments>3</experiments>
</comment>
<comment type="interaction">
    <interactant intactId="EBI-7116203">
        <id>O75031</id>
    </interactant>
    <interactant intactId="EBI-10173222">
        <id>A2VCK2</id>
        <label>DCDC2B</label>
    </interactant>
    <organismsDiffer>false</organismsDiffer>
    <experiments>3</experiments>
</comment>
<comment type="interaction">
    <interactant intactId="EBI-7116203">
        <id>O75031</id>
    </interactant>
    <interactant intactId="EBI-17470374">
        <id>Q30KQ8</id>
        <label>DEFB112</label>
    </interactant>
    <organismsDiffer>false</organismsDiffer>
    <experiments>3</experiments>
</comment>
<comment type="interaction">
    <interactant intactId="EBI-7116203">
        <id>O75031</id>
    </interactant>
    <interactant intactId="EBI-399105">
        <id>Q9NPF5</id>
        <label>DMAP1</label>
    </interactant>
    <organismsDiffer>false</organismsDiffer>
    <experiments>3</experiments>
</comment>
<comment type="interaction">
    <interactant intactId="EBI-7116203">
        <id>O75031</id>
    </interactant>
    <interactant intactId="EBI-9679045">
        <id>Q9NQL9</id>
        <label>DMRT3</label>
    </interactant>
    <organismsDiffer>false</organismsDiffer>
    <experiments>3</experiments>
</comment>
<comment type="interaction">
    <interactant intactId="EBI-7116203">
        <id>O75031</id>
    </interactant>
    <interactant intactId="EBI-12021848">
        <id>Q8NF50-4</id>
        <label>DOCK8</label>
    </interactant>
    <organismsDiffer>false</organismsDiffer>
    <experiments>3</experiments>
</comment>
<comment type="interaction">
    <interactant intactId="EBI-7116203">
        <id>O75031</id>
    </interactant>
    <interactant intactId="EBI-359932">
        <id>Q92785</id>
        <label>DPF2</label>
    </interactant>
    <organismsDiffer>false</organismsDiffer>
    <experiments>6</experiments>
</comment>
<comment type="interaction">
    <interactant intactId="EBI-7116203">
        <id>O75031</id>
    </interactant>
    <interactant intactId="EBI-749800">
        <id>Q9UII6</id>
        <label>DUSP13B</label>
    </interactant>
    <organismsDiffer>false</organismsDiffer>
    <experiments>3</experiments>
</comment>
<comment type="interaction">
    <interactant intactId="EBI-7116203">
        <id>O75031</id>
    </interactant>
    <interactant intactId="EBI-769261">
        <id>Q96JC9</id>
        <label>EAF1</label>
    </interactant>
    <organismsDiffer>false</organismsDiffer>
    <experiments>3</experiments>
</comment>
<comment type="interaction">
    <interactant intactId="EBI-7116203">
        <id>O75031</id>
    </interactant>
    <interactant intactId="EBI-353818">
        <id>O15371</id>
        <label>EIF3D</label>
    </interactant>
    <organismsDiffer>false</organismsDiffer>
    <experiments>3</experiments>
</comment>
<comment type="interaction">
    <interactant intactId="EBI-7116203">
        <id>O75031</id>
    </interactant>
    <interactant intactId="EBI-741705">
        <id>Q8IYF1</id>
        <label>ELOA2</label>
    </interactant>
    <organismsDiffer>false</organismsDiffer>
    <experiments>5</experiments>
</comment>
<comment type="interaction">
    <interactant intactId="EBI-7116203">
        <id>O75031</id>
    </interactant>
    <interactant intactId="EBI-489887">
        <id>P50402</id>
        <label>EMD</label>
    </interactant>
    <organismsDiffer>false</organismsDiffer>
    <experiments>3</experiments>
</comment>
<comment type="interaction">
    <interactant intactId="EBI-7116203">
        <id>O75031</id>
    </interactant>
    <interactant intactId="EBI-744099">
        <id>Q9H0I2</id>
        <label>ENKD1</label>
    </interactant>
    <organismsDiffer>false</organismsDiffer>
    <experiments>3</experiments>
</comment>
<comment type="interaction">
    <interactant intactId="EBI-7116203">
        <id>O75031</id>
    </interactant>
    <interactant intactId="EBI-968308">
        <id>P54753</id>
        <label>EPHB3</label>
    </interactant>
    <organismsDiffer>false</organismsDiffer>
    <experiments>3</experiments>
</comment>
<comment type="interaction">
    <interactant intactId="EBI-7116203">
        <id>O75031</id>
    </interactant>
    <interactant intactId="EBI-6255981">
        <id>Q7L775</id>
        <label>EPM2AIP1</label>
    </interactant>
    <organismsDiffer>false</organismsDiffer>
    <experiments>3</experiments>
</comment>
<comment type="interaction">
    <interactant intactId="EBI-7116203">
        <id>O75031</id>
    </interactant>
    <interactant intactId="EBI-11977223">
        <id>O95990-4</id>
        <label>FAM107A</label>
    </interactant>
    <organismsDiffer>false</organismsDiffer>
    <experiments>3</experiments>
</comment>
<comment type="interaction">
    <interactant intactId="EBI-7116203">
        <id>O75031</id>
    </interactant>
    <interactant intactId="EBI-1752811">
        <id>Q9BQ89</id>
        <label>FAM110A</label>
    </interactant>
    <organismsDiffer>false</organismsDiffer>
    <experiments>3</experiments>
</comment>
<comment type="interaction">
    <interactant intactId="EBI-7116203">
        <id>O75031</id>
    </interactant>
    <interactant intactId="EBI-2558383">
        <id>Q8TC76</id>
        <label>FAM110B</label>
    </interactant>
    <organismsDiffer>false</organismsDiffer>
    <experiments>3</experiments>
</comment>
<comment type="interaction">
    <interactant intactId="EBI-7116203">
        <id>O75031</id>
    </interactant>
    <interactant intactId="EBI-11986315">
        <id>Q9H5Z6-2</id>
        <label>FAM124B</label>
    </interactant>
    <organismsDiffer>false</organismsDiffer>
    <experiments>3</experiments>
</comment>
<comment type="interaction">
    <interactant intactId="EBI-7116203">
        <id>O75031</id>
    </interactant>
    <interactant intactId="EBI-7225287">
        <id>Q96MY7</id>
        <label>FAM161B</label>
    </interactant>
    <organismsDiffer>false</organismsDiffer>
    <experiments>3</experiments>
</comment>
<comment type="interaction">
    <interactant intactId="EBI-7116203">
        <id>O75031</id>
    </interactant>
    <interactant intactId="EBI-12958227">
        <id>Q86W67</id>
        <label>FAM228A</label>
    </interactant>
    <organismsDiffer>false</organismsDiffer>
    <experiments>3</experiments>
</comment>
<comment type="interaction">
    <interactant intactId="EBI-7116203">
        <id>O75031</id>
    </interactant>
    <interactant intactId="EBI-6658203">
        <id>Q86YD7</id>
        <label>FAM90A1</label>
    </interactant>
    <organismsDiffer>false</organismsDiffer>
    <experiments>3</experiments>
</comment>
<comment type="interaction">
    <interactant intactId="EBI-7116203">
        <id>O75031</id>
    </interactant>
    <interactant intactId="EBI-12104696">
        <id>Q9H4M3-2</id>
        <label>FBXO44</label>
    </interactant>
    <organismsDiffer>false</organismsDiffer>
    <experiments>3</experiments>
</comment>
<comment type="interaction">
    <interactant intactId="EBI-7116203">
        <id>O75031</id>
    </interactant>
    <interactant intactId="EBI-701903">
        <id>Q14192</id>
        <label>FHL2</label>
    </interactant>
    <organismsDiffer>false</organismsDiffer>
    <experiments>3</experiments>
</comment>
<comment type="interaction">
    <interactant intactId="EBI-7116203">
        <id>O75031</id>
    </interactant>
    <interactant intactId="EBI-741101">
        <id>Q13643</id>
        <label>FHL3</label>
    </interactant>
    <organismsDiffer>false</organismsDiffer>
    <experiments>3</experiments>
</comment>
<comment type="interaction">
    <interactant intactId="EBI-7116203">
        <id>O75031</id>
    </interactant>
    <interactant intactId="EBI-719415">
        <id>Q4VC44</id>
        <label>FLYWCH1</label>
    </interactant>
    <organismsDiffer>false</organismsDiffer>
    <experiments>3</experiments>
</comment>
<comment type="interaction">
    <interactant intactId="EBI-7116203">
        <id>O75031</id>
    </interactant>
    <interactant intactId="EBI-3922408">
        <id>Q9Y231</id>
        <label>FUT9</label>
    </interactant>
    <organismsDiffer>false</organismsDiffer>
    <experiments>3</experiments>
</comment>
<comment type="interaction">
    <interactant intactId="EBI-7116203">
        <id>O75031</id>
    </interactant>
    <interactant intactId="EBI-7960826">
        <id>Q8NHY3</id>
        <label>GAS2L2</label>
    </interactant>
    <organismsDiffer>false</organismsDiffer>
    <experiments>3</experiments>
</comment>
<comment type="interaction">
    <interactant intactId="EBI-7116203">
        <id>O75031</id>
    </interactant>
    <interactant intactId="EBI-1052570">
        <id>O95995</id>
        <label>GAS8</label>
    </interactant>
    <organismsDiffer>false</organismsDiffer>
    <experiments>3</experiments>
</comment>
<comment type="interaction">
    <interactant intactId="EBI-7116203">
        <id>O75031</id>
    </interactant>
    <interactant intactId="EBI-10188645">
        <id>O75603</id>
        <label>GCM2</label>
    </interactant>
    <organismsDiffer>false</organismsDiffer>
    <experiments>3</experiments>
</comment>
<comment type="interaction">
    <interactant intactId="EBI-7116203">
        <id>O75031</id>
    </interactant>
    <interactant intactId="EBI-744104">
        <id>P55040</id>
        <label>GEM</label>
    </interactant>
    <organismsDiffer>false</organismsDiffer>
    <experiments>3</experiments>
</comment>
<comment type="interaction">
    <interactant intactId="EBI-7116203">
        <id>O75031</id>
    </interactant>
    <interactant intactId="EBI-10259069">
        <id>Q86UU5</id>
        <label>GGN</label>
    </interactant>
    <organismsDiffer>false</organismsDiffer>
    <experiments>6</experiments>
</comment>
<comment type="interaction">
    <interactant intactId="EBI-7116203">
        <id>O75031</id>
    </interactant>
    <interactant intactId="EBI-746682">
        <id>Q9NVN8</id>
        <label>GNL3L</label>
    </interactant>
    <organismsDiffer>false</organismsDiffer>
    <experiments>3</experiments>
</comment>
<comment type="interaction">
    <interactant intactId="EBI-7116203">
        <id>O75031</id>
    </interactant>
    <interactant intactId="EBI-6164177">
        <id>Q92805</id>
        <label>GOLGA1</label>
    </interactant>
    <organismsDiffer>false</organismsDiffer>
    <experiments>3</experiments>
</comment>
<comment type="interaction">
    <interactant intactId="EBI-7116203">
        <id>O75031</id>
    </interactant>
    <interactant intactId="EBI-751540">
        <id>O95872</id>
        <label>GPANK1</label>
    </interactant>
    <organismsDiffer>false</organismsDiffer>
    <experiments>3</experiments>
</comment>
<comment type="interaction">
    <interactant intactId="EBI-7116203">
        <id>O75031</id>
    </interactant>
    <interactant intactId="EBI-11959863">
        <id>Q9NWQ4-1</id>
        <label>GPATCH2L</label>
    </interactant>
    <organismsDiffer>false</organismsDiffer>
    <experiments>3</experiments>
</comment>
<comment type="interaction">
    <interactant intactId="EBI-7116203">
        <id>O75031</id>
    </interactant>
    <interactant intactId="EBI-2349758">
        <id>Q86WP2</id>
        <label>GPBP1</label>
    </interactant>
    <organismsDiffer>false</organismsDiffer>
    <experiments>3</experiments>
</comment>
<comment type="interaction">
    <interactant intactId="EBI-7116203">
        <id>O75031</id>
    </interactant>
    <interactant intactId="EBI-746309">
        <id>Q92917</id>
        <label>GPKOW</label>
    </interactant>
    <organismsDiffer>false</organismsDiffer>
    <experiments>3</experiments>
</comment>
<comment type="interaction">
    <interactant intactId="EBI-7116203">
        <id>O75031</id>
    </interactant>
    <interactant intactId="EBI-347538">
        <id>Q9Y4H4</id>
        <label>GPSM3</label>
    </interactant>
    <organismsDiffer>false</organismsDiffer>
    <experiments>3</experiments>
</comment>
<comment type="interaction">
    <interactant intactId="EBI-7116203">
        <id>O75031</id>
    </interactant>
    <interactant intactId="EBI-5325551">
        <id>Q7L7L0</id>
        <label>H2AC25</label>
    </interactant>
    <organismsDiffer>false</organismsDiffer>
    <experiments>3</experiments>
</comment>
<comment type="interaction">
    <interactant intactId="EBI-7116203">
        <id>O75031</id>
    </interactant>
    <interactant intactId="EBI-1237328">
        <id>Q8TF76</id>
        <label>HASPIN</label>
    </interactant>
    <organismsDiffer>false</organismsDiffer>
    <experiments>3</experiments>
</comment>
<comment type="interaction">
    <interactant intactId="EBI-7116203">
        <id>O75031</id>
    </interactant>
    <interactant intactId="EBI-9834454">
        <id>P08631-2</id>
        <label>HCK</label>
    </interactant>
    <organismsDiffer>false</organismsDiffer>
    <experiments>3</experiments>
</comment>
<comment type="interaction">
    <interactant intactId="EBI-7116203">
        <id>O75031</id>
    </interactant>
    <interactant intactId="EBI-11953488">
        <id>P56524-2</id>
        <label>HDAC4</label>
    </interactant>
    <organismsDiffer>false</organismsDiffer>
    <experiments>3</experiments>
</comment>
<comment type="interaction">
    <interactant intactId="EBI-7116203">
        <id>O75031</id>
    </interactant>
    <interactant intactId="EBI-5460660">
        <id>Q96MH2</id>
        <label>HEXIM2</label>
    </interactant>
    <organismsDiffer>false</organismsDiffer>
    <experiments>3</experiments>
</comment>
<comment type="interaction">
    <interactant intactId="EBI-7116203">
        <id>O75031</id>
    </interactant>
    <interactant intactId="EBI-750630">
        <id>Q9UBP5</id>
        <label>HEY2</label>
    </interactant>
    <organismsDiffer>false</organismsDiffer>
    <experiments>3</experiments>
</comment>
<comment type="interaction">
    <interactant intactId="EBI-7116203">
        <id>O75031</id>
    </interactant>
    <interactant intactId="EBI-352823">
        <id>P55795</id>
        <label>HNRNPH2</label>
    </interactant>
    <organismsDiffer>false</organismsDiffer>
    <experiments>3</experiments>
</comment>
<comment type="interaction">
    <interactant intactId="EBI-7116203">
        <id>O75031</id>
    </interactant>
    <interactant intactId="EBI-3893317">
        <id>P09067</id>
        <label>HOXB5</label>
    </interactant>
    <organismsDiffer>false</organismsDiffer>
    <experiments>3</experiments>
</comment>
<comment type="interaction">
    <interactant intactId="EBI-7116203">
        <id>O75031</id>
    </interactant>
    <interactant intactId="EBI-1752118">
        <id>P31273</id>
        <label>HOXC8</label>
    </interactant>
    <organismsDiffer>false</organismsDiffer>
    <experiments>3</experiments>
</comment>
<comment type="interaction">
    <interactant intactId="EBI-7116203">
        <id>O75031</id>
    </interactant>
    <interactant intactId="EBI-2556750">
        <id>Q03933</id>
        <label>HSF2</label>
    </interactant>
    <organismsDiffer>false</organismsDiffer>
    <experiments>4</experiments>
</comment>
<comment type="interaction">
    <interactant intactId="EBI-7116203">
        <id>O75031</id>
    </interactant>
    <interactant intactId="EBI-2806011">
        <id>Q9BTL4</id>
        <label>IER2</label>
    </interactant>
    <organismsDiffer>false</organismsDiffer>
    <experiments>3</experiments>
</comment>
<comment type="interaction">
    <interactant intactId="EBI-7116203">
        <id>O75031</id>
    </interactant>
    <interactant intactId="EBI-17178971">
        <id>Q14005-2</id>
        <label>IL16</label>
    </interactant>
    <organismsDiffer>false</organismsDiffer>
    <experiments>3</experiments>
</comment>
<comment type="interaction">
    <interactant intactId="EBI-7116203">
        <id>O75031</id>
    </interactant>
    <interactant intactId="EBI-715611">
        <id>Q9C086</id>
        <label>INO80B</label>
    </interactant>
    <organismsDiffer>false</organismsDiffer>
    <experiments>3</experiments>
</comment>
<comment type="interaction">
    <interactant intactId="EBI-7116203">
        <id>O75031</id>
    </interactant>
    <interactant intactId="EBI-10236940">
        <id>Q15735</id>
        <label>INPP5J</label>
    </interactant>
    <organismsDiffer>false</organismsDiffer>
    <experiments>3</experiments>
</comment>
<comment type="interaction">
    <interactant intactId="EBI-7116203">
        <id>O75031</id>
    </interactant>
    <interactant intactId="EBI-12146621">
        <id>Q6ZSG2</id>
        <label>INSYN2A</label>
    </interactant>
    <organismsDiffer>false</organismsDiffer>
    <experiments>3</experiments>
</comment>
<comment type="interaction">
    <interactant intactId="EBI-7116203">
        <id>O75031</id>
    </interactant>
    <interactant intactId="EBI-11347579">
        <id>Q8NFU5</id>
        <label>IPMK</label>
    </interactant>
    <organismsDiffer>false</organismsDiffer>
    <experiments>3</experiments>
</comment>
<comment type="interaction">
    <interactant intactId="EBI-7116203">
        <id>O75031</id>
    </interactant>
    <interactant intactId="EBI-12206419">
        <id>Q4KMZ1</id>
        <label>IQCC</label>
    </interactant>
    <organismsDiffer>false</organismsDiffer>
    <experiments>3</experiments>
</comment>
<comment type="interaction">
    <interactant intactId="EBI-7116203">
        <id>O75031</id>
    </interactant>
    <interactant intactId="EBI-712105">
        <id>Q13352</id>
        <label>ITGB3BP</label>
    </interactant>
    <organismsDiffer>false</organismsDiffer>
    <experiments>3</experiments>
</comment>
<comment type="interaction">
    <interactant intactId="EBI-7116203">
        <id>O75031</id>
    </interactant>
    <interactant intactId="EBI-17181882">
        <id>O75564-2</id>
        <label>JRK</label>
    </interactant>
    <organismsDiffer>false</organismsDiffer>
    <experiments>3</experiments>
</comment>
<comment type="interaction">
    <interactant intactId="EBI-7116203">
        <id>O75031</id>
    </interactant>
    <interactant intactId="EBI-2556193">
        <id>Q63ZY3</id>
        <label>KANK2</label>
    </interactant>
    <organismsDiffer>false</organismsDiffer>
    <experiments>3</experiments>
</comment>
<comment type="interaction">
    <interactant intactId="EBI-7116203">
        <id>O75031</id>
    </interactant>
    <interactant intactId="EBI-399080">
        <id>Q92993</id>
        <label>KAT5</label>
    </interactant>
    <organismsDiffer>false</organismsDiffer>
    <experiments>3</experiments>
</comment>
<comment type="interaction">
    <interactant intactId="EBI-7116203">
        <id>O75031</id>
    </interactant>
    <interactant intactId="EBI-739493">
        <id>Q6ZU52</id>
        <label>KIAA0408</label>
    </interactant>
    <organismsDiffer>false</organismsDiffer>
    <experiments>5</experiments>
</comment>
<comment type="interaction">
    <interactant intactId="EBI-7116203">
        <id>O75031</id>
    </interactant>
    <interactant intactId="EBI-10213781">
        <id>Q5T7B8-2</id>
        <label>KIF24</label>
    </interactant>
    <organismsDiffer>false</organismsDiffer>
    <experiments>3</experiments>
</comment>
<comment type="interaction">
    <interactant intactId="EBI-7116203">
        <id>O75031</id>
    </interactant>
    <interactant intactId="EBI-355878">
        <id>P33176</id>
        <label>KIF5B</label>
    </interactant>
    <organismsDiffer>false</organismsDiffer>
    <experiments>3</experiments>
</comment>
<comment type="interaction">
    <interactant intactId="EBI-7116203">
        <id>O75031</id>
    </interactant>
    <interactant intactId="EBI-8472129">
        <id>Q9HAQ2</id>
        <label>KIF9</label>
    </interactant>
    <organismsDiffer>false</organismsDiffer>
    <experiments>3</experiments>
</comment>
<comment type="interaction">
    <interactant intactId="EBI-7116203">
        <id>O75031</id>
    </interactant>
    <interactant intactId="EBI-14069005">
        <id>Q9BVG8-5</id>
        <label>KIFC3</label>
    </interactant>
    <organismsDiffer>false</organismsDiffer>
    <experiments>3</experiments>
</comment>
<comment type="interaction">
    <interactant intactId="EBI-7116203">
        <id>O75031</id>
    </interactant>
    <interactant intactId="EBI-7232405">
        <id>O43474</id>
        <label>KLF4</label>
    </interactant>
    <organismsDiffer>false</organismsDiffer>
    <experiments>3</experiments>
</comment>
<comment type="interaction">
    <interactant intactId="EBI-7116203">
        <id>O75031</id>
    </interactant>
    <interactant intactId="EBI-739909">
        <id>Q969R5</id>
        <label>L3MBTL2</label>
    </interactant>
    <organismsDiffer>false</organismsDiffer>
    <experiments>3</experiments>
</comment>
<comment type="interaction">
    <interactant intactId="EBI-7116203">
        <id>O75031</id>
    </interactant>
    <interactant intactId="EBI-11985629">
        <id>Q96JM7-2</id>
        <label>L3MBTL3</label>
    </interactant>
    <organismsDiffer>false</organismsDiffer>
    <experiments>3</experiments>
</comment>
<comment type="interaction">
    <interactant intactId="EBI-7116203">
        <id>O75031</id>
    </interactant>
    <interactant intactId="EBI-12778187">
        <id>Q8NA19-2</id>
        <label>L3MBTL4</label>
    </interactant>
    <organismsDiffer>false</organismsDiffer>
    <experiments>3</experiments>
</comment>
<comment type="interaction">
    <interactant intactId="EBI-7116203">
        <id>O75031</id>
    </interactant>
    <interactant intactId="EBI-1052105">
        <id>Q14657</id>
        <label>LAGE3</label>
    </interactant>
    <organismsDiffer>false</organismsDiffer>
    <experiments>3</experiments>
</comment>
<comment type="interaction">
    <interactant intactId="EBI-7116203">
        <id>O75031</id>
    </interactant>
    <interactant intactId="EBI-749878">
        <id>Q8IYD9</id>
        <label>LAS2</label>
    </interactant>
    <organismsDiffer>false</organismsDiffer>
    <experiments>3</experiments>
</comment>
<comment type="interaction">
    <interactant intactId="EBI-7116203">
        <id>O75031</id>
    </interactant>
    <interactant intactId="EBI-12994693">
        <id>P41159</id>
        <label>LEP</label>
    </interactant>
    <organismsDiffer>false</organismsDiffer>
    <experiments>3</experiments>
</comment>
<comment type="interaction">
    <interactant intactId="EBI-7116203">
        <id>O75031</id>
    </interactant>
    <interactant intactId="EBI-720805">
        <id>P56470</id>
        <label>LGALS4</label>
    </interactant>
    <organismsDiffer>false</organismsDiffer>
    <experiments>3</experiments>
</comment>
<comment type="interaction">
    <interactant intactId="EBI-7116203">
        <id>O75031</id>
    </interactant>
    <interactant intactId="EBI-2798728">
        <id>P61968</id>
        <label>LMO4</label>
    </interactant>
    <organismsDiffer>false</organismsDiffer>
    <experiments>3</experiments>
</comment>
<comment type="interaction">
    <interactant intactId="EBI-7116203">
        <id>O75031</id>
    </interactant>
    <interactant intactId="EBI-739832">
        <id>Q8TBB1</id>
        <label>LNX1</label>
    </interactant>
    <organismsDiffer>false</organismsDiffer>
    <experiments>3</experiments>
</comment>
<comment type="interaction">
    <interactant intactId="EBI-7116203">
        <id>O75031</id>
    </interactant>
    <interactant intactId="EBI-14752528">
        <id>Q8IYG6</id>
        <label>LRRC56</label>
    </interactant>
    <organismsDiffer>false</organismsDiffer>
    <experiments>3</experiments>
</comment>
<comment type="interaction">
    <interactant intactId="EBI-7116203">
        <id>O75031</id>
    </interactant>
    <interactant intactId="EBI-745046">
        <id>Q8WUT4</id>
        <label>LRRN4</label>
    </interactant>
    <organismsDiffer>false</organismsDiffer>
    <experiments>3</experiments>
</comment>
<comment type="interaction">
    <interactant intactId="EBI-7116203">
        <id>O75031</id>
    </interactant>
    <interactant intactId="EBI-10198848">
        <id>Q9P127</id>
        <label>LUZP4</label>
    </interactant>
    <organismsDiffer>false</organismsDiffer>
    <experiments>3</experiments>
</comment>
<comment type="interaction">
    <interactant intactId="EBI-7116203">
        <id>O75031</id>
    </interactant>
    <interactant intactId="EBI-716006">
        <id>Q9Y5V3</id>
        <label>MAGED1</label>
    </interactant>
    <organismsDiffer>false</organismsDiffer>
    <experiments>3</experiments>
</comment>
<comment type="interaction">
    <interactant intactId="EBI-7116203">
        <id>O75031</id>
    </interactant>
    <interactant intactId="EBI-746778">
        <id>Q96A72</id>
        <label>MAGOHB</label>
    </interactant>
    <organismsDiffer>false</organismsDiffer>
    <experiments>3</experiments>
</comment>
<comment type="interaction">
    <interactant intactId="EBI-7116203">
        <id>O75031</id>
    </interactant>
    <interactant intactId="EBI-949983">
        <id>Q9H992</id>
        <label>MARCHF7</label>
    </interactant>
    <organismsDiffer>false</organismsDiffer>
    <experiments>3</experiments>
</comment>
<comment type="interaction">
    <interactant intactId="EBI-7116203">
        <id>O75031</id>
    </interactant>
    <interactant intactId="EBI-12232917">
        <id>Q02078-5</id>
        <label>MEF2A</label>
    </interactant>
    <organismsDiffer>false</organismsDiffer>
    <experiments>3</experiments>
</comment>
<comment type="interaction">
    <interactant intactId="EBI-7116203">
        <id>O75031</id>
    </interactant>
    <interactant intactId="EBI-1048159">
        <id>P55081</id>
        <label>MFAP1</label>
    </interactant>
    <organismsDiffer>false</organismsDiffer>
    <experiments>3</experiments>
</comment>
<comment type="interaction">
    <interactant intactId="EBI-7116203">
        <id>O75031</id>
    </interactant>
    <interactant intactId="EBI-14086479">
        <id>Q8IVT4</id>
        <label>MGC50722</label>
    </interactant>
    <organismsDiffer>false</organismsDiffer>
    <experiments>3</experiments>
</comment>
<comment type="interaction">
    <interactant intactId="EBI-7116203">
        <id>O75031</id>
    </interactant>
    <interactant intactId="EBI-2555085">
        <id>Q8IVT2</id>
        <label>MISP</label>
    </interactant>
    <organismsDiffer>false</organismsDiffer>
    <experiments>3</experiments>
</comment>
<comment type="interaction">
    <interactant intactId="EBI-7116203">
        <id>O75031</id>
    </interactant>
    <interactant intactId="EBI-2340269">
        <id>Q13064</id>
        <label>MKRN3</label>
    </interactant>
    <organismsDiffer>false</organismsDiffer>
    <experiments>3</experiments>
</comment>
<comment type="interaction">
    <interactant intactId="EBI-7116203">
        <id>O75031</id>
    </interactant>
    <interactant intactId="EBI-742459">
        <id>Q9BU76</id>
        <label>MMTAG2</label>
    </interactant>
    <organismsDiffer>false</organismsDiffer>
    <experiments>3</experiments>
</comment>
<comment type="interaction">
    <interactant intactId="EBI-7116203">
        <id>O75031</id>
    </interactant>
    <interactant intactId="EBI-4290865">
        <id>Q96EY5</id>
        <label>MVB12A</label>
    </interactant>
    <organismsDiffer>false</organismsDiffer>
    <experiments>3</experiments>
</comment>
<comment type="interaction">
    <interactant intactId="EBI-7116203">
        <id>O75031</id>
    </interactant>
    <interactant intactId="EBI-5662487">
        <id>Q8TDC0</id>
        <label>MYOZ3</label>
    </interactant>
    <organismsDiffer>false</organismsDiffer>
    <experiments>3</experiments>
</comment>
<comment type="interaction">
    <interactant intactId="EBI-7116203">
        <id>O75031</id>
    </interactant>
    <interactant intactId="EBI-8641936">
        <id>Q15742</id>
        <label>NAB2</label>
    </interactant>
    <organismsDiffer>false</organismsDiffer>
    <experiments>3</experiments>
</comment>
<comment type="interaction">
    <interactant intactId="EBI-7116203">
        <id>O75031</id>
    </interactant>
    <interactant intactId="EBI-713635">
        <id>O43639</id>
        <label>NCK2</label>
    </interactant>
    <organismsDiffer>false</organismsDiffer>
    <experiments>3</experiments>
</comment>
<comment type="interaction">
    <interactant intactId="EBI-7116203">
        <id>O75031</id>
    </interactant>
    <interactant intactId="EBI-3951858">
        <id>Q16649</id>
        <label>NFIL3</label>
    </interactant>
    <organismsDiffer>false</organismsDiffer>
    <experiments>3</experiments>
</comment>
<comment type="interaction">
    <interactant intactId="EBI-7116203">
        <id>O75031</id>
    </interactant>
    <interactant intactId="EBI-2859639">
        <id>Q5HYW2</id>
        <label>NHSL2</label>
    </interactant>
    <organismsDiffer>false</organismsDiffer>
    <experiments>3</experiments>
</comment>
<comment type="interaction">
    <interactant intactId="EBI-7116203">
        <id>O75031</id>
    </interactant>
    <interactant intactId="EBI-744871">
        <id>O00746</id>
        <label>NME4</label>
    </interactant>
    <organismsDiffer>false</organismsDiffer>
    <experiments>3</experiments>
</comment>
<comment type="interaction">
    <interactant intactId="EBI-7116203">
        <id>O75031</id>
    </interactant>
    <interactant intactId="EBI-953859">
        <id>P01160</id>
        <label>NPPA</label>
    </interactant>
    <organismsDiffer>false</organismsDiffer>
    <experiments>3</experiments>
</comment>
<comment type="interaction">
    <interactant intactId="EBI-7116203">
        <id>O75031</id>
    </interactant>
    <interactant intactId="EBI-12028784">
        <id>Q6X4W1-2</id>
        <label>NSMF</label>
    </interactant>
    <organismsDiffer>false</organismsDiffer>
    <experiments>3</experiments>
</comment>
<comment type="interaction">
    <interactant intactId="EBI-7116203">
        <id>O75031</id>
    </interactant>
    <interactant intactId="EBI-741158">
        <id>Q96HA8</id>
        <label>NTAQ1</label>
    </interactant>
    <organismsDiffer>false</organismsDiffer>
    <experiments>3</experiments>
</comment>
<comment type="interaction">
    <interactant intactId="EBI-7116203">
        <id>O75031</id>
    </interactant>
    <interactant intactId="EBI-726826">
        <id>Q8NFP7</id>
        <label>NUDT10</label>
    </interactant>
    <organismsDiffer>false</organismsDiffer>
    <experiments>3</experiments>
</comment>
<comment type="interaction">
    <interactant intactId="EBI-7116203">
        <id>O75031</id>
    </interactant>
    <interactant intactId="EBI-398874">
        <id>Q9UBU9</id>
        <label>NXF1</label>
    </interactant>
    <organismsDiffer>false</organismsDiffer>
    <experiments>3</experiments>
</comment>
<comment type="interaction">
    <interactant intactId="EBI-7116203">
        <id>O75031</id>
    </interactant>
    <interactant intactId="EBI-748974">
        <id>Q96CV9</id>
        <label>OPTN</label>
    </interactant>
    <organismsDiffer>false</organismsDiffer>
    <experiments>3</experiments>
</comment>
<comment type="interaction">
    <interactant intactId="EBI-7116203">
        <id>O75031</id>
    </interactant>
    <interactant intactId="EBI-1753251">
        <id>Q99572</id>
        <label>P2RX7</label>
    </interactant>
    <organismsDiffer>false</organismsDiffer>
    <experiments>3</experiments>
</comment>
<comment type="interaction">
    <interactant intactId="EBI-7116203">
        <id>O75031</id>
    </interactant>
    <interactant intactId="EBI-714785">
        <id>Q9H8K7</id>
        <label>PAAT</label>
    </interactant>
    <organismsDiffer>false</organismsDiffer>
    <experiments>3</experiments>
</comment>
<comment type="interaction">
    <interactant intactId="EBI-7116203">
        <id>O75031</id>
    </interactant>
    <interactant intactId="EBI-1053685">
        <id>Q9NQU5</id>
        <label>PAK6</label>
    </interactant>
    <organismsDiffer>false</organismsDiffer>
    <experiments>3</experiments>
</comment>
<comment type="interaction">
    <interactant intactId="EBI-7116203">
        <id>O75031</id>
    </interactant>
    <interactant intactId="EBI-1053912">
        <id>O95340</id>
        <label>PAPSS2</label>
    </interactant>
    <organismsDiffer>false</organismsDiffer>
    <experiments>3</experiments>
</comment>
<comment type="interaction">
    <interactant intactId="EBI-7116203">
        <id>O75031</id>
    </interactant>
    <interactant intactId="EBI-295391">
        <id>Q9BYG5</id>
        <label>PARD6B</label>
    </interactant>
    <organismsDiffer>false</organismsDiffer>
    <experiments>3</experiments>
</comment>
<comment type="interaction">
    <interactant intactId="EBI-7116203">
        <id>O75031</id>
    </interactant>
    <interactant intactId="EBI-350517">
        <id>Q9NR12</id>
        <label>PDLIM7</label>
    </interactant>
    <organismsDiffer>false</organismsDiffer>
    <experiments>3</experiments>
</comment>
<comment type="interaction">
    <interactant intactId="EBI-7116203">
        <id>O75031</id>
    </interactant>
    <interactant intactId="EBI-79165">
        <id>Q9NRD5</id>
        <label>PICK1</label>
    </interactant>
    <organismsDiffer>false</organismsDiffer>
    <experiments>3</experiments>
</comment>
<comment type="interaction">
    <interactant intactId="EBI-7116203">
        <id>O75031</id>
    </interactant>
    <interactant intactId="EBI-7813714">
        <id>Q13563</id>
        <label>PKD2</label>
    </interactant>
    <organismsDiffer>false</organismsDiffer>
    <experiments>3</experiments>
</comment>
<comment type="interaction">
    <interactant intactId="EBI-7116203">
        <id>O75031</id>
    </interactant>
    <interactant intactId="EBI-602382">
        <id>Q16512</id>
        <label>PKN1</label>
    </interactant>
    <organismsDiffer>false</organismsDiffer>
    <experiments>3</experiments>
</comment>
<comment type="interaction">
    <interactant intactId="EBI-7116203">
        <id>O75031</id>
    </interactant>
    <interactant intactId="EBI-9087684">
        <id>Q13835-2</id>
        <label>PKP1</label>
    </interactant>
    <organismsDiffer>false</organismsDiffer>
    <experiments>3</experiments>
</comment>
<comment type="interaction">
    <interactant intactId="EBI-7116203">
        <id>O75031</id>
    </interactant>
    <interactant intactId="EBI-10694821">
        <id>Q6P1J6-2</id>
        <label>PLB1</label>
    </interactant>
    <organismsDiffer>false</organismsDiffer>
    <experiments>3</experiments>
</comment>
<comment type="interaction">
    <interactant intactId="EBI-7116203">
        <id>O75031</id>
    </interactant>
    <interactant intactId="EBI-4401947">
        <id>Q9HB19</id>
        <label>PLEKHA2</label>
    </interactant>
    <organismsDiffer>false</organismsDiffer>
    <experiments>3</experiments>
</comment>
<comment type="interaction">
    <interactant intactId="EBI-7116203">
        <id>O75031</id>
    </interactant>
    <interactant intactId="EBI-12069346">
        <id>Q6IQ23-2</id>
        <label>PLEKHA7</label>
    </interactant>
    <organismsDiffer>false</organismsDiffer>
    <experiments>3</experiments>
</comment>
<comment type="interaction">
    <interactant intactId="EBI-7116203">
        <id>O75031</id>
    </interactant>
    <interactant intactId="EBI-10171633">
        <id>Q96PV4</id>
        <label>PNMA5</label>
    </interactant>
    <organismsDiffer>false</organismsDiffer>
    <experiments>3</experiments>
</comment>
<comment type="interaction">
    <interactant intactId="EBI-7116203">
        <id>O75031</id>
    </interactant>
    <interactant intactId="EBI-1389308">
        <id>Q7Z3K3</id>
        <label>POGZ</label>
    </interactant>
    <organismsDiffer>false</organismsDiffer>
    <experiments>3</experiments>
</comment>
<comment type="interaction">
    <interactant intactId="EBI-7116203">
        <id>O75031</id>
    </interactant>
    <interactant intactId="EBI-10276663">
        <id>Q8WUT1</id>
        <label>POLDIP3</label>
    </interactant>
    <organismsDiffer>false</organismsDiffer>
    <experiments>3</experiments>
</comment>
<comment type="interaction">
    <interactant intactId="EBI-7116203">
        <id>O75031</id>
    </interactant>
    <interactant intactId="EBI-12219503">
        <id>P01189</id>
        <label>POMC</label>
    </interactant>
    <organismsDiffer>false</organismsDiffer>
    <experiments>6</experiments>
</comment>
<comment type="interaction">
    <interactant intactId="EBI-7116203">
        <id>O75031</id>
    </interactant>
    <interactant intactId="EBI-3923368">
        <id>Q8N3J5</id>
        <label>PPM1K</label>
    </interactant>
    <organismsDiffer>false</organismsDiffer>
    <experiments>3</experiments>
</comment>
<comment type="interaction">
    <interactant intactId="EBI-7116203">
        <id>O75031</id>
    </interactant>
    <interactant intactId="EBI-2557469">
        <id>Q6NYC8</id>
        <label>PPP1R18</label>
    </interactant>
    <organismsDiffer>false</organismsDiffer>
    <experiments>3</experiments>
</comment>
<comment type="interaction">
    <interactant intactId="EBI-7116203">
        <id>O75031</id>
    </interactant>
    <interactant intactId="EBI-2798416">
        <id>Q99633</id>
        <label>PRPF18</label>
    </interactant>
    <organismsDiffer>false</organismsDiffer>
    <experiments>3</experiments>
</comment>
<comment type="interaction">
    <interactant intactId="EBI-7116203">
        <id>O75031</id>
    </interactant>
    <interactant intactId="EBI-744322">
        <id>O43395</id>
        <label>PRPF3</label>
    </interactant>
    <organismsDiffer>false</organismsDiffer>
    <experiments>3</experiments>
</comment>
<comment type="interaction">
    <interactant intactId="EBI-7116203">
        <id>O75031</id>
    </interactant>
    <interactant intactId="EBI-1567797">
        <id>Q8WWY3</id>
        <label>PRPF31</label>
    </interactant>
    <organismsDiffer>false</organismsDiffer>
    <experiments>3</experiments>
</comment>
<comment type="interaction">
    <interactant intactId="EBI-7116203">
        <id>O75031</id>
    </interactant>
    <interactant intactId="EBI-1567866">
        <id>Q6MZQ0</id>
        <label>PRR5L</label>
    </interactant>
    <organismsDiffer>false</organismsDiffer>
    <experiments>3</experiments>
</comment>
<comment type="interaction">
    <interactant intactId="EBI-7116203">
        <id>O75031</id>
    </interactant>
    <interactant intactId="EBI-359352">
        <id>P25786</id>
        <label>PSMA1</label>
    </interactant>
    <organismsDiffer>false</organismsDiffer>
    <experiments>3</experiments>
</comment>
<comment type="interaction">
    <interactant intactId="EBI-7116203">
        <id>O75031</id>
    </interactant>
    <interactant intactId="EBI-1050964">
        <id>O43586</id>
        <label>PSTPIP1</label>
    </interactant>
    <organismsDiffer>false</organismsDiffer>
    <experiments>3</experiments>
</comment>
<comment type="interaction">
    <interactant intactId="EBI-7116203">
        <id>O75031</id>
    </interactant>
    <interactant intactId="EBI-1049676">
        <id>Q7L804</id>
        <label>RAB11FIP2</label>
    </interactant>
    <organismsDiffer>false</organismsDiffer>
    <experiments>3</experiments>
</comment>
<comment type="interaction">
    <interactant intactId="EBI-7116203">
        <id>O75031</id>
    </interactant>
    <interactant intactId="EBI-12404625">
        <id>O95755</id>
        <label>RAB36</label>
    </interactant>
    <organismsDiffer>false</organismsDiffer>
    <experiments>3</experiments>
</comment>
<comment type="interaction">
    <interactant intactId="EBI-7116203">
        <id>O75031</id>
    </interactant>
    <interactant intactId="EBI-743796">
        <id>Q8TBN0</id>
        <label>RAB3IL1</label>
    </interactant>
    <organismsDiffer>false</organismsDiffer>
    <experiments>3</experiments>
</comment>
<comment type="interaction">
    <interactant intactId="EBI-7116203">
        <id>O75031</id>
    </interactant>
    <interactant intactId="EBI-1055693">
        <id>O75771</id>
        <label>RAD51D</label>
    </interactant>
    <organismsDiffer>false</organismsDiffer>
    <experiments>3</experiments>
</comment>
<comment type="interaction">
    <interactant intactId="EBI-7116203">
        <id>O75031</id>
    </interactant>
    <interactant intactId="EBI-9512693">
        <id>Q53GL6</id>
        <label>RALY</label>
    </interactant>
    <organismsDiffer>false</organismsDiffer>
    <experiments>3</experiments>
</comment>
<comment type="interaction">
    <interactant intactId="EBI-7116203">
        <id>O75031</id>
    </interactant>
    <interactant intactId="EBI-740272">
        <id>Q96I25</id>
        <label>RBM17</label>
    </interactant>
    <organismsDiffer>false</organismsDiffer>
    <experiments>3</experiments>
</comment>
<comment type="interaction">
    <interactant intactId="EBI-7116203">
        <id>O75031</id>
    </interactant>
    <interactant intactId="EBI-740773">
        <id>Q96IZ5</id>
        <label>RBM41</label>
    </interactant>
    <organismsDiffer>false</organismsDiffer>
    <experiments>3</experiments>
</comment>
<comment type="interaction">
    <interactant intactId="EBI-7116203">
        <id>O75031</id>
    </interactant>
    <interactant intactId="EBI-473821">
        <id>Q5RL73</id>
        <label>RBM48</label>
    </interactant>
    <organismsDiffer>false</organismsDiffer>
    <experiments>3</experiments>
</comment>
<comment type="interaction">
    <interactant intactId="EBI-7116203">
        <id>O75031</id>
    </interactant>
    <interactant intactId="EBI-1504830">
        <id>Q9P2K3-2</id>
        <label>RCOR3</label>
    </interactant>
    <organismsDiffer>false</organismsDiffer>
    <experiments>3</experiments>
</comment>
<comment type="interaction">
    <interactant intactId="EBI-7116203">
        <id>O75031</id>
    </interactant>
    <interactant intactId="EBI-2856313">
        <id>Q9GZR2</id>
        <label>REXO4</label>
    </interactant>
    <organismsDiffer>false</organismsDiffer>
    <experiments>3</experiments>
</comment>
<comment type="interaction">
    <interactant intactId="EBI-7116203">
        <id>O75031</id>
    </interactant>
    <interactant intactId="EBI-10265323">
        <id>Q8N443</id>
        <label>RIBC1</label>
    </interactant>
    <organismsDiffer>false</organismsDiffer>
    <experiments>3</experiments>
</comment>
<comment type="interaction">
    <interactant intactId="EBI-7116203">
        <id>O75031</id>
    </interactant>
    <interactant intactId="EBI-366017">
        <id>Q13671</id>
        <label>RIN1</label>
    </interactant>
    <organismsDiffer>false</organismsDiffer>
    <experiments>3</experiments>
</comment>
<comment type="interaction">
    <interactant intactId="EBI-7116203">
        <id>O75031</id>
    </interactant>
    <interactant intactId="EBI-9916363">
        <id>Q8IUD6</id>
        <label>RNF135</label>
    </interactant>
    <organismsDiffer>false</organismsDiffer>
    <experiments>4</experiments>
</comment>
<comment type="interaction">
    <interactant intactId="EBI-7116203">
        <id>O75031</id>
    </interactant>
    <interactant intactId="EBI-6380946">
        <id>Q8NCN4</id>
        <label>RNF169</label>
    </interactant>
    <organismsDiffer>false</organismsDiffer>
    <experiments>3</experiments>
</comment>
<comment type="interaction">
    <interactant intactId="EBI-7116203">
        <id>O75031</id>
    </interactant>
    <interactant intactId="EBI-10288358">
        <id>Q96HH0</id>
        <label>ROBO3</label>
    </interactant>
    <organismsDiffer>false</organismsDiffer>
    <experiments>3</experiments>
</comment>
<comment type="interaction">
    <interactant intactId="EBI-7116203">
        <id>O75031</id>
    </interactant>
    <interactant intactId="EBI-353027">
        <id>P62857</id>
        <label>RPS28</label>
    </interactant>
    <organismsDiffer>false</organismsDiffer>
    <experiments>3</experiments>
</comment>
<comment type="interaction">
    <interactant intactId="EBI-7116203">
        <id>O75031</id>
    </interactant>
    <interactant intactId="EBI-10217913">
        <id>Q14D33</id>
        <label>RTP5</label>
    </interactant>
    <organismsDiffer>false</organismsDiffer>
    <experiments>3</experiments>
</comment>
<comment type="interaction">
    <interactant intactId="EBI-7116203">
        <id>O75031</id>
    </interactant>
    <interactant intactId="EBI-11986417">
        <id>Q9UPU9-3</id>
        <label>SAMD4A</label>
    </interactant>
    <organismsDiffer>false</organismsDiffer>
    <experiments>3</experiments>
</comment>
<comment type="interaction">
    <interactant intactId="EBI-7116203">
        <id>O75031</id>
    </interactant>
    <interactant intactId="EBI-13072754">
        <id>Q5SSQ6-2</id>
        <label>SAPCD1</label>
    </interactant>
    <organismsDiffer>false</organismsDiffer>
    <experiments>3</experiments>
</comment>
<comment type="interaction">
    <interactant intactId="EBI-7116203">
        <id>O75031</id>
    </interactant>
    <interactant intactId="EBI-607761">
        <id>O43290</id>
        <label>SART1</label>
    </interactant>
    <organismsDiffer>false</organismsDiffer>
    <experiments>6</experiments>
</comment>
<comment type="interaction">
    <interactant intactId="EBI-7116203">
        <id>O75031</id>
    </interactant>
    <interactant intactId="EBI-3957636">
        <id>Q8IYX7</id>
        <label>SAXO1</label>
    </interactant>
    <organismsDiffer>false</organismsDiffer>
    <experiments>3</experiments>
</comment>
<comment type="interaction">
    <interactant intactId="EBI-7116203">
        <id>O75031</id>
    </interactant>
    <interactant intactId="EBI-12000762">
        <id>Q7Z5V6-2</id>
        <label>SAXO4</label>
    </interactant>
    <organismsDiffer>false</organismsDiffer>
    <experiments>3</experiments>
</comment>
<comment type="interaction">
    <interactant intactId="EBI-7116203">
        <id>O75031</id>
    </interactant>
    <interactant intactId="EBI-748391">
        <id>Q9BWG6</id>
        <label>SCNM1</label>
    </interactant>
    <organismsDiffer>false</organismsDiffer>
    <experiments>3</experiments>
</comment>
<comment type="interaction">
    <interactant intactId="EBI-7116203">
        <id>O75031</id>
    </interactant>
    <interactant intactId="EBI-727004">
        <id>O00560</id>
        <label>SDCBP</label>
    </interactant>
    <organismsDiffer>false</organismsDiffer>
    <experiments>3</experiments>
</comment>
<comment type="interaction">
    <interactant intactId="EBI-7116203">
        <id>O75031</id>
    </interactant>
    <interactant intactId="EBI-10216195">
        <id>P59797</id>
        <label>SELENOV</label>
    </interactant>
    <organismsDiffer>false</organismsDiffer>
    <experiments>3</experiments>
</comment>
<comment type="interaction">
    <interactant intactId="EBI-7116203">
        <id>O75031</id>
    </interactant>
    <interactant intactId="EBI-11017428">
        <id>Q13214-2</id>
        <label>SEMA3B</label>
    </interactant>
    <organismsDiffer>false</organismsDiffer>
    <experiments>3</experiments>
</comment>
<comment type="interaction">
    <interactant intactId="EBI-7116203">
        <id>O75031</id>
    </interactant>
    <interactant intactId="EBI-10303490">
        <id>Q9C0C4</id>
        <label>SEMA4C</label>
    </interactant>
    <organismsDiffer>false</organismsDiffer>
    <experiments>3</experiments>
</comment>
<comment type="interaction">
    <interactant intactId="EBI-7116203">
        <id>O75031</id>
    </interactant>
    <interactant intactId="EBI-693002">
        <id>Q8WYJ6</id>
        <label>SEPTIN1</label>
    </interactant>
    <organismsDiffer>false</organismsDiffer>
    <experiments>3</experiments>
</comment>
<comment type="interaction">
    <interactant intactId="EBI-7116203">
        <id>O75031</id>
    </interactant>
    <interactant intactId="EBI-851564">
        <id>Q9UHD8-2</id>
        <label>SEPTIN9</label>
    </interactant>
    <organismsDiffer>false</organismsDiffer>
    <experiments>3</experiments>
</comment>
<comment type="interaction">
    <interactant intactId="EBI-7116203">
        <id>O75031</id>
    </interactant>
    <interactant intactId="EBI-11149962">
        <id>Q15047-3</id>
        <label>SETDB1</label>
    </interactant>
    <organismsDiffer>false</organismsDiffer>
    <experiments>3</experiments>
</comment>
<comment type="interaction">
    <interactant intactId="EBI-7116203">
        <id>O75031</id>
    </interactant>
    <interactant intactId="EBI-747035">
        <id>Q9H788</id>
        <label>SH2D4A</label>
    </interactant>
    <organismsDiffer>false</organismsDiffer>
    <experiments>3</experiments>
</comment>
<comment type="interaction">
    <interactant intactId="EBI-7116203">
        <id>O75031</id>
    </interactant>
    <interactant intactId="EBI-11955083">
        <id>Q9NUL5-4</id>
        <label>SHFL</label>
    </interactant>
    <organismsDiffer>false</organismsDiffer>
    <experiments>3</experiments>
</comment>
<comment type="interaction">
    <interactant intactId="EBI-7116203">
        <id>O75031</id>
    </interactant>
    <interactant intactId="EBI-12037847">
        <id>Q6ZSJ9</id>
        <label>SHISA6</label>
    </interactant>
    <organismsDiffer>false</organismsDiffer>
    <experiments>3</experiments>
</comment>
<comment type="interaction">
    <interactant intactId="EBI-7116203">
        <id>O75031</id>
    </interactant>
    <interactant intactId="EBI-10269374">
        <id>Q8ND83</id>
        <label>SLAIN1</label>
    </interactant>
    <organismsDiffer>false</organismsDiffer>
    <experiments>3</experiments>
</comment>
<comment type="interaction">
    <interactant intactId="EBI-7116203">
        <id>O75031</id>
    </interactant>
    <interactant intactId="EBI-9071694">
        <id>P30531</id>
        <label>SLC6A1</label>
    </interactant>
    <organismsDiffer>false</organismsDiffer>
    <experiments>3</experiments>
</comment>
<comment type="interaction">
    <interactant intactId="EBI-7116203">
        <id>O75031</id>
    </interactant>
    <interactant intactId="EBI-358436">
        <id>Q12824-2</id>
        <label>SMARCB1</label>
    </interactant>
    <organismsDiffer>false</organismsDiffer>
    <experiments>3</experiments>
</comment>
<comment type="interaction">
    <interactant intactId="EBI-7116203">
        <id>O75031</id>
    </interactant>
    <interactant intactId="EBI-358489">
        <id>Q96GM5</id>
        <label>SMARCD1</label>
    </interactant>
    <organismsDiffer>false</organismsDiffer>
    <experiments>3</experiments>
</comment>
<comment type="interaction">
    <interactant intactId="EBI-7116203">
        <id>O75031</id>
    </interactant>
    <interactant intactId="EBI-2872322">
        <id>Q9H0W8</id>
        <label>SMG9</label>
    </interactant>
    <organismsDiffer>false</organismsDiffer>
    <experiments>3</experiments>
</comment>
<comment type="interaction">
    <interactant intactId="EBI-7116203">
        <id>O75031</id>
    </interactant>
    <interactant intactId="EBI-11915024">
        <id>Q16533</id>
        <label>SNAPC1</label>
    </interactant>
    <organismsDiffer>false</organismsDiffer>
    <experiments>3</experiments>
</comment>
<comment type="interaction">
    <interactant intactId="EBI-7116203">
        <id>O75031</id>
    </interactant>
    <interactant intactId="EBI-632715">
        <id>Q13573</id>
        <label>SNW1</label>
    </interactant>
    <organismsDiffer>false</organismsDiffer>
    <experiments>3</experiments>
</comment>
<comment type="interaction">
    <interactant intactId="EBI-7116203">
        <id>O75031</id>
    </interactant>
    <interactant intactId="EBI-298169">
        <id>Q96RF0</id>
        <label>SNX18</label>
    </interactant>
    <organismsDiffer>false</organismsDiffer>
    <experiments>3</experiments>
</comment>
<comment type="interaction">
    <interactant intactId="EBI-7116203">
        <id>O75031</id>
    </interactant>
    <interactant intactId="EBI-12142321">
        <id>Q969T3-2</id>
        <label>SNX21</label>
    </interactant>
    <organismsDiffer>false</organismsDiffer>
    <experiments>3</experiments>
</comment>
<comment type="interaction">
    <interactant intactId="EBI-7116203">
        <id>O75031</id>
    </interactant>
    <interactant intactId="EBI-7067260">
        <id>Q8NHS9</id>
        <label>SPATA22</label>
    </interactant>
    <organismsDiffer>false</organismsDiffer>
    <experiments>6</experiments>
</comment>
<comment type="interaction">
    <interactant intactId="EBI-7116203">
        <id>O75031</id>
    </interactant>
    <interactant intactId="EBI-12175897">
        <id>Q15772-4</id>
        <label>SPEG</label>
    </interactant>
    <organismsDiffer>false</organismsDiffer>
    <experiments>3</experiments>
</comment>
<comment type="interaction">
    <interactant intactId="EBI-7116203">
        <id>O75031</id>
    </interactant>
    <interactant intactId="EBI-717201">
        <id>Q9UQ90</id>
        <label>SPG7</label>
    </interactant>
    <organismsDiffer>false</organismsDiffer>
    <experiments>3</experiments>
</comment>
<comment type="interaction">
    <interactant intactId="EBI-7116203">
        <id>O75031</id>
    </interactant>
    <interactant intactId="EBI-10174456">
        <id>Q8N865</id>
        <label>SPMIP4</label>
    </interactant>
    <organismsDiffer>false</organismsDiffer>
    <experiments>3</experiments>
</comment>
<comment type="interaction">
    <interactant intactId="EBI-7116203">
        <id>O75031</id>
    </interactant>
    <interactant intactId="EBI-10269322">
        <id>Q8NCR6</id>
        <label>SPMIP6</label>
    </interactant>
    <organismsDiffer>false</organismsDiffer>
    <experiments>3</experiments>
</comment>
<comment type="interaction">
    <interactant intactId="EBI-7116203">
        <id>O75031</id>
    </interactant>
    <interactant intactId="EBI-5235340">
        <id>Q7Z699</id>
        <label>SPRED1</label>
    </interactant>
    <organismsDiffer>false</organismsDiffer>
    <experiments>3</experiments>
</comment>
<comment type="interaction">
    <interactant intactId="EBI-7116203">
        <id>O75031</id>
    </interactant>
    <interactant intactId="EBI-3866665">
        <id>O43609</id>
        <label>SPRY1</label>
    </interactant>
    <organismsDiffer>false</organismsDiffer>
    <experiments>3</experiments>
</comment>
<comment type="interaction">
    <interactant intactId="EBI-7116203">
        <id>O75031</id>
    </interactant>
    <interactant intactId="EBI-2682386">
        <id>Q96PV0</id>
        <label>SYNGAP1</label>
    </interactant>
    <organismsDiffer>false</organismsDiffer>
    <experiments>3</experiments>
</comment>
<comment type="interaction">
    <interactant intactId="EBI-7116203">
        <id>O75031</id>
    </interactant>
    <interactant intactId="EBI-358708">
        <id>Q9NYJ8</id>
        <label>TAB2</label>
    </interactant>
    <organismsDiffer>false</organismsDiffer>
    <experiments>3</experiments>
</comment>
<comment type="interaction">
    <interactant intactId="EBI-7116203">
        <id>O75031</id>
    </interactant>
    <interactant intactId="EBI-12136823">
        <id>Q8N103</id>
        <label>TAGAP</label>
    </interactant>
    <organismsDiffer>false</organismsDiffer>
    <experiments>3</experiments>
</comment>
<comment type="interaction">
    <interactant intactId="EBI-7116203">
        <id>O75031</id>
    </interactant>
    <interactant intactId="EBI-745958">
        <id>Q5VWN6</id>
        <label>TASOR2</label>
    </interactant>
    <organismsDiffer>false</organismsDiffer>
    <experiments>3</experiments>
</comment>
<comment type="interaction">
    <interactant intactId="EBI-7116203">
        <id>O75031</id>
    </interactant>
    <interactant intactId="EBI-1644036">
        <id>Q86TI0</id>
        <label>TBC1D1</label>
    </interactant>
    <organismsDiffer>false</organismsDiffer>
    <experiments>3</experiments>
</comment>
<comment type="interaction">
    <interactant intactId="EBI-7116203">
        <id>O75031</id>
    </interactant>
    <interactant intactId="EBI-17455779">
        <id>Q9Y2I9-2</id>
        <label>TBC1D30</label>
    </interactant>
    <organismsDiffer>false</organismsDiffer>
    <experiments>3</experiments>
</comment>
<comment type="interaction">
    <interactant intactId="EBI-7116203">
        <id>O75031</id>
    </interactant>
    <interactant intactId="EBI-710310">
        <id>Q15560</id>
        <label>TCEA2</label>
    </interactant>
    <organismsDiffer>false</organismsDiffer>
    <experiments>3</experiments>
</comment>
<comment type="interaction">
    <interactant intactId="EBI-7116203">
        <id>O75031</id>
    </interactant>
    <interactant intactId="EBI-7413767">
        <id>Q9Y242</id>
        <label>TCF19</label>
    </interactant>
    <organismsDiffer>false</organismsDiffer>
    <experiments>3</experiments>
</comment>
<comment type="interaction">
    <interactant intactId="EBI-7116203">
        <id>O75031</id>
    </interactant>
    <interactant intactId="EBI-11139477">
        <id>Q96N21</id>
        <label>TEPSIN</label>
    </interactant>
    <organismsDiffer>false</organismsDiffer>
    <experiments>3</experiments>
</comment>
<comment type="interaction">
    <interactant intactId="EBI-7116203">
        <id>O75031</id>
    </interactant>
    <interactant intactId="EBI-1105213">
        <id>Q9UBB9</id>
        <label>TFIP11</label>
    </interactant>
    <organismsDiffer>false</organismsDiffer>
    <experiments>3</experiments>
</comment>
<comment type="interaction">
    <interactant intactId="EBI-7116203">
        <id>O75031</id>
    </interactant>
    <interactant intactId="EBI-3925505">
        <id>Q8TBB0</id>
        <label>THAP6</label>
    </interactant>
    <organismsDiffer>false</organismsDiffer>
    <experiments>3</experiments>
</comment>
<comment type="interaction">
    <interactant intactId="EBI-7116203">
        <id>O75031</id>
    </interactant>
    <interactant intactId="EBI-11423693">
        <id>Q9UIK5</id>
        <label>TMEFF2</label>
    </interactant>
    <organismsDiffer>false</organismsDiffer>
    <experiments>3</experiments>
</comment>
<comment type="interaction">
    <interactant intactId="EBI-7116203">
        <id>O75031</id>
    </interactant>
    <interactant intactId="EBI-712598">
        <id>P62328</id>
        <label>TMSB4X</label>
    </interactant>
    <organismsDiffer>false</organismsDiffer>
    <experiments>3</experiments>
</comment>
<comment type="interaction">
    <interactant intactId="EBI-7116203">
        <id>O75031</id>
    </interactant>
    <interactant intactId="EBI-7543499">
        <id>Q8IZW8</id>
        <label>TNS4</label>
    </interactant>
    <organismsDiffer>false</organismsDiffer>
    <experiments>3</experiments>
</comment>
<comment type="interaction">
    <interactant intactId="EBI-7116203">
        <id>O75031</id>
    </interactant>
    <interactant intactId="EBI-12815137">
        <id>Q96NM4-3</id>
        <label>TOX2</label>
    </interactant>
    <organismsDiffer>false</organismsDiffer>
    <experiments>5</experiments>
</comment>
<comment type="interaction">
    <interactant intactId="EBI-7116203">
        <id>O75031</id>
    </interactant>
    <interactant intactId="EBI-11952721">
        <id>Q05BL1</id>
        <label>TP53BP2</label>
    </interactant>
    <organismsDiffer>false</organismsDiffer>
    <experiments>3</experiments>
</comment>
<comment type="interaction">
    <interactant intactId="EBI-7116203">
        <id>O75031</id>
    </interactant>
    <interactant intactId="EBI-523498">
        <id>O00463</id>
        <label>TRAF5</label>
    </interactant>
    <organismsDiffer>false</organismsDiffer>
    <experiments>3</experiments>
</comment>
<comment type="interaction">
    <interactant intactId="EBI-7116203">
        <id>O75031</id>
    </interactant>
    <interactant intactId="EBI-372432">
        <id>Q8WW01</id>
        <label>TSEN15</label>
    </interactant>
    <organismsDiffer>false</organismsDiffer>
    <experiments>3</experiments>
</comment>
<comment type="interaction">
    <interactant intactId="EBI-7116203">
        <id>O75031</id>
    </interactant>
    <interactant intactId="EBI-10241197">
        <id>Q3SY00</id>
        <label>TSGA10IP</label>
    </interactant>
    <organismsDiffer>false</organismsDiffer>
    <experiments>3</experiments>
</comment>
<comment type="interaction">
    <interactant intactId="EBI-7116203">
        <id>O75031</id>
    </interactant>
    <interactant intactId="EBI-9053916">
        <id>Q63HK5</id>
        <label>TSHZ3</label>
    </interactant>
    <organismsDiffer>false</organismsDiffer>
    <experiments>3</experiments>
</comment>
<comment type="interaction">
    <interactant intactId="EBI-7116203">
        <id>O75031</id>
    </interactant>
    <interactant intactId="EBI-9090990">
        <id>Q5W5X9-3</id>
        <label>TTC23</label>
    </interactant>
    <organismsDiffer>false</organismsDiffer>
    <experiments>3</experiments>
</comment>
<comment type="interaction">
    <interactant intactId="EBI-7116203">
        <id>O75031</id>
    </interactant>
    <interactant intactId="EBI-2851213">
        <id>Q8N5M4</id>
        <label>TTC9C</label>
    </interactant>
    <organismsDiffer>false</organismsDiffer>
    <experiments>3</experiments>
</comment>
<comment type="interaction">
    <interactant intactId="EBI-7116203">
        <id>O75031</id>
    </interactant>
    <interactant intactId="EBI-5357290">
        <id>O75386</id>
        <label>TULP3</label>
    </interactant>
    <organismsDiffer>false</organismsDiffer>
    <experiments>3</experiments>
</comment>
<comment type="interaction">
    <interactant intactId="EBI-7116203">
        <id>O75031</id>
    </interactant>
    <interactant intactId="EBI-11988865">
        <id>A5PKU2</id>
        <label>TUSC5</label>
    </interactant>
    <organismsDiffer>false</organismsDiffer>
    <experiments>3</experiments>
</comment>
<comment type="interaction">
    <interactant intactId="EBI-7116203">
        <id>O75031</id>
    </interactant>
    <interactant intactId="EBI-742943">
        <id>Q96BW1</id>
        <label>UPRT</label>
    </interactant>
    <organismsDiffer>false</organismsDiffer>
    <experiments>3</experiments>
</comment>
<comment type="interaction">
    <interactant intactId="EBI-7116203">
        <id>O75031</id>
    </interactant>
    <interactant intactId="EBI-2511991">
        <id>Q9Y2K6</id>
        <label>USP20</label>
    </interactant>
    <organismsDiffer>false</organismsDiffer>
    <experiments>3</experiments>
</comment>
<comment type="interaction">
    <interactant intactId="EBI-7116203">
        <id>O75031</id>
    </interactant>
    <interactant intactId="EBI-11980193">
        <id>Q14119</id>
        <label>VEZF1</label>
    </interactant>
    <organismsDiffer>false</organismsDiffer>
    <experiments>3</experiments>
</comment>
<comment type="interaction">
    <interactant intactId="EBI-7116203">
        <id>O75031</id>
    </interactant>
    <interactant intactId="EBI-12157263">
        <id>P40337-2</id>
        <label>VHL</label>
    </interactant>
    <organismsDiffer>false</organismsDiffer>
    <experiments>6</experiments>
</comment>
<comment type="interaction">
    <interactant intactId="EBI-7116203">
        <id>O75031</id>
    </interactant>
    <interactant intactId="EBI-399189">
        <id>Q15906</id>
        <label>VPS72</label>
    </interactant>
    <organismsDiffer>false</organismsDiffer>
    <experiments>3</experiments>
</comment>
<comment type="interaction">
    <interactant intactId="EBI-7116203">
        <id>O75031</id>
    </interactant>
    <interactant intactId="EBI-1548747">
        <id>Q92558</id>
        <label>WASF1</label>
    </interactant>
    <organismsDiffer>false</organismsDiffer>
    <experiments>3</experiments>
</comment>
<comment type="interaction">
    <interactant intactId="EBI-7116203">
        <id>O75031</id>
    </interactant>
    <interactant intactId="EBI-12032042">
        <id>Q64LD2-2</id>
        <label>WDR25</label>
    </interactant>
    <organismsDiffer>false</organismsDiffer>
    <experiments>3</experiments>
</comment>
<comment type="interaction">
    <interactant intactId="EBI-7116203">
        <id>O75031</id>
    </interactant>
    <interactant intactId="EBI-716093">
        <id>P13994</id>
        <label>YJU2B</label>
    </interactant>
    <organismsDiffer>false</organismsDiffer>
    <experiments>3</experiments>
</comment>
<comment type="interaction">
    <interactant intactId="EBI-7116203">
        <id>O75031</id>
    </interactant>
    <interactant intactId="EBI-711925">
        <id>Q05516</id>
        <label>ZBTB16</label>
    </interactant>
    <organismsDiffer>false</organismsDiffer>
    <experiments>3</experiments>
</comment>
<comment type="interaction">
    <interactant intactId="EBI-7116203">
        <id>O75031</id>
    </interactant>
    <interactant intactId="EBI-12287587">
        <id>B2RXF5</id>
        <label>ZBTB42</label>
    </interactant>
    <organismsDiffer>false</organismsDiffer>
    <experiments>3</experiments>
</comment>
<comment type="interaction">
    <interactant intactId="EBI-7116203">
        <id>O75031</id>
    </interactant>
    <interactant intactId="EBI-14104088">
        <id>Q53FD0-2</id>
        <label>ZC2HC1C</label>
    </interactant>
    <organismsDiffer>false</organismsDiffer>
    <experiments>3</experiments>
</comment>
<comment type="interaction">
    <interactant intactId="EBI-7116203">
        <id>O75031</id>
    </interactant>
    <interactant intactId="EBI-12274792">
        <id>Q504Y3</id>
        <label>ZCWPW2</label>
    </interactant>
    <organismsDiffer>false</organismsDiffer>
    <experiments>3</experiments>
</comment>
<comment type="interaction">
    <interactant intactId="EBI-7116203">
        <id>O75031</id>
    </interactant>
    <interactant intactId="EBI-6448783">
        <id>G3V1X1</id>
        <label>ZFC3H1</label>
    </interactant>
    <organismsDiffer>false</organismsDiffer>
    <experiments>6</experiments>
</comment>
<comment type="interaction">
    <interactant intactId="EBI-7116203">
        <id>O75031</id>
    </interactant>
    <interactant intactId="EBI-10183064">
        <id>Q8N5A5-2</id>
        <label>ZGPAT</label>
    </interactant>
    <organismsDiffer>false</organismsDiffer>
    <experiments>3</experiments>
</comment>
<comment type="interaction">
    <interactant intactId="EBI-7116203">
        <id>O75031</id>
    </interactant>
    <interactant intactId="EBI-6874731">
        <id>O15231</id>
        <label>ZNF185</label>
    </interactant>
    <organismsDiffer>false</organismsDiffer>
    <experiments>3</experiments>
</comment>
<comment type="interaction">
    <interactant intactId="EBI-7116203">
        <id>O75031</id>
    </interactant>
    <interactant intactId="EBI-10177272">
        <id>P15622-3</id>
        <label>ZNF250</label>
    </interactant>
    <organismsDiffer>false</organismsDiffer>
    <experiments>3</experiments>
</comment>
<comment type="interaction">
    <interactant intactId="EBI-7116203">
        <id>O75031</id>
    </interactant>
    <interactant intactId="EBI-740727">
        <id>Q8TAU3</id>
        <label>ZNF417</label>
    </interactant>
    <organismsDiffer>false</organismsDiffer>
    <experiments>3</experiments>
</comment>
<comment type="interaction">
    <interactant intactId="EBI-7116203">
        <id>O75031</id>
    </interactant>
    <interactant intactId="EBI-10269136">
        <id>Q8NB15</id>
        <label>ZNF511</label>
    </interactant>
    <organismsDiffer>false</organismsDiffer>
    <experiments>3</experiments>
</comment>
<comment type="interaction">
    <interactant intactId="EBI-7116203">
        <id>O75031</id>
    </interactant>
    <interactant intactId="EBI-10273713">
        <id>Q8TBZ8</id>
        <label>ZNF564</label>
    </interactant>
    <organismsDiffer>false</organismsDiffer>
    <experiments>3</experiments>
</comment>
<comment type="interaction">
    <interactant intactId="EBI-7116203">
        <id>O75031</id>
    </interactant>
    <interactant intactId="EBI-745520">
        <id>Q9P0T4</id>
        <label>ZNF581</label>
    </interactant>
    <organismsDiffer>false</organismsDiffer>
    <experiments>6</experiments>
</comment>
<comment type="interaction">
    <interactant intactId="EBI-7116203">
        <id>O75031</id>
    </interactant>
    <interactant intactId="EBI-6427977">
        <id>Q96SQ5</id>
        <label>ZNF587</label>
    </interactant>
    <organismsDiffer>false</organismsDiffer>
    <experiments>3</experiments>
</comment>
<comment type="interaction">
    <interactant intactId="EBI-7116203">
        <id>O75031</id>
    </interactant>
    <interactant intactId="EBI-11985915">
        <id>Q5T619</id>
        <label>ZNF648</label>
    </interactant>
    <organismsDiffer>false</organismsDiffer>
    <experiments>3</experiments>
</comment>
<comment type="interaction">
    <interactant intactId="EBI-7116203">
        <id>O75031</id>
    </interactant>
    <interactant intactId="EBI-4395732">
        <id>P0C7X2</id>
        <label>ZNF688</label>
    </interactant>
    <organismsDiffer>false</organismsDiffer>
    <experiments>3</experiments>
</comment>
<comment type="interaction">
    <interactant intactId="EBI-7116203">
        <id>O75031</id>
    </interactant>
    <interactant intactId="EBI-10251462">
        <id>Q6NX45</id>
        <label>ZNF774</label>
    </interactant>
    <organismsDiffer>false</organismsDiffer>
    <experiments>3</experiments>
</comment>
<comment type="interaction">
    <interactant intactId="EBI-7116203">
        <id>O75031</id>
    </interactant>
    <interactant intactId="EBI-5667516">
        <id>Q9Y2P0</id>
        <label>ZNF835</label>
    </interactant>
    <organismsDiffer>false</organismsDiffer>
    <experiments>3</experiments>
</comment>
<comment type="interaction">
    <interactant intactId="EBI-7116203">
        <id>O75031</id>
    </interactant>
    <interactant intactId="EBI-2849074">
        <id>P51523</id>
        <label>ZNF84</label>
    </interactant>
    <organismsDiffer>false</organismsDiffer>
    <experiments>3</experiments>
</comment>
<comment type="interaction">
    <interactant intactId="EBI-7116203">
        <id>O75031</id>
    </interactant>
    <interactant intactId="EBI-10225757">
        <id>Q08AG5</id>
        <label>ZNF844</label>
    </interactant>
    <organismsDiffer>false</organismsDiffer>
    <experiments>3</experiments>
</comment>
<comment type="subcellular location">
    <subcellularLocation>
        <location evidence="1">Cytoplasm</location>
    </subcellularLocation>
    <subcellularLocation>
        <location evidence="4">Chromosome</location>
    </subcellularLocation>
    <text evidence="4">Localizes on double-strand breaks (DSBs) in mitotic and meiotic chromosomes.</text>
</comment>
<comment type="alternative products">
    <event type="alternative splicing"/>
    <isoform>
        <id>O75031-1</id>
        <name>1</name>
        <sequence type="displayed"/>
    </isoform>
    <isoform>
        <id>O75031-2</id>
        <name>2</name>
        <sequence type="described" ref="VSP_054158"/>
    </isoform>
</comment>
<comment type="tissue specificity">
    <text evidence="4 6">Testis specific. Overexpressed in some tumors (PubMed:31242413).</text>
</comment>
<comment type="PTM">
    <text evidence="3">Sumoylated by UBE2I in response to MEKK1-mediated stimuli.</text>
</comment>
<comment type="disease" evidence="5">
    <disease id="DI-06064">
        <name>Premature ovarian failure 19</name>
        <acronym>POF19</acronym>
        <description>A form of premature ovarian failure, an ovarian disorder defined as the cessation of ovarian function under the age of 40 years. It is characterized by oligomenorrhea or amenorrhea, in the presence of elevated levels of serum gonadotropins and low estradiol. POF19 is an autosomal recessive form characterized by irregular menstrual cycles and cessation of menstruation in the third decade of life.</description>
        <dbReference type="MIM" id="619245"/>
    </disease>
    <text>The disease is caused by variants affecting the gene represented in this entry.</text>
</comment>
<feature type="chain" id="PRO_0000084077" description="Heat shock factor 2-binding protein">
    <location>
        <begin position="1"/>
        <end position="334"/>
    </location>
</feature>
<feature type="region of interest" description="Interaction with BRME1" evidence="1">
    <location>
        <begin position="14"/>
        <end position="51"/>
    </location>
</feature>
<feature type="region of interest" description="Interaction with BRCA2" evidence="1">
    <location>
        <begin position="83"/>
        <end position="334"/>
    </location>
</feature>
<feature type="coiled-coil region" evidence="2">
    <location>
        <begin position="49"/>
        <end position="122"/>
    </location>
</feature>
<feature type="splice variant" id="VSP_054158" description="In isoform 2." evidence="7">
    <location>
        <begin position="1"/>
        <end position="75"/>
    </location>
</feature>
<feature type="sequence variant" id="VAR_084602" description="In POF19; in mice this mutation leads to a decreased protein stability with reduced fertility due to a lower frequency of crossovers in meiocytes; dbSNP:rs200655253." evidence="5">
    <original>S</original>
    <variation>L</variation>
    <location>
        <position position="167"/>
    </location>
</feature>
<feature type="mutagenesis site" description="Abolishes interaction with BRCA2." evidence="4">
    <original>R</original>
    <variation>T</variation>
    <location>
        <position position="200"/>
    </location>
</feature>
<feature type="sequence conflict" description="In Ref. 3; BAA95539." evidence="8" ref="3">
    <original>LM</original>
    <variation>YG</variation>
    <location>
        <begin position="232"/>
        <end position="233"/>
    </location>
</feature>
<feature type="strand" evidence="11">
    <location>
        <begin position="20"/>
        <end position="24"/>
    </location>
</feature>
<feature type="helix" evidence="11">
    <location>
        <begin position="25"/>
        <end position="46"/>
    </location>
</feature>
<feature type="helix" evidence="10">
    <location>
        <begin position="106"/>
        <end position="134"/>
    </location>
</feature>
<feature type="helix" evidence="10">
    <location>
        <begin position="138"/>
        <end position="145"/>
    </location>
</feature>
<feature type="strand" evidence="10">
    <location>
        <begin position="146"/>
        <end position="148"/>
    </location>
</feature>
<feature type="helix" evidence="10">
    <location>
        <begin position="149"/>
        <end position="166"/>
    </location>
</feature>
<feature type="helix" evidence="10">
    <location>
        <begin position="177"/>
        <end position="195"/>
    </location>
</feature>
<feature type="helix" evidence="10">
    <location>
        <begin position="197"/>
        <end position="206"/>
    </location>
</feature>
<feature type="helix" evidence="10">
    <location>
        <begin position="208"/>
        <end position="220"/>
    </location>
</feature>
<feature type="helix" evidence="10">
    <location>
        <begin position="227"/>
        <end position="240"/>
    </location>
</feature>
<feature type="helix" evidence="10">
    <location>
        <begin position="244"/>
        <end position="251"/>
    </location>
</feature>
<feature type="helix" evidence="10">
    <location>
        <begin position="256"/>
        <end position="264"/>
    </location>
</feature>
<feature type="helix" evidence="10">
    <location>
        <begin position="269"/>
        <end position="283"/>
    </location>
</feature>
<feature type="strand" evidence="10">
    <location>
        <begin position="289"/>
        <end position="292"/>
    </location>
</feature>
<feature type="helix" evidence="10">
    <location>
        <begin position="293"/>
        <end position="298"/>
    </location>
</feature>
<feature type="helix" evidence="10">
    <location>
        <begin position="302"/>
        <end position="308"/>
    </location>
</feature>
<feature type="helix" evidence="10">
    <location>
        <begin position="314"/>
        <end position="328"/>
    </location>
</feature>
<evidence type="ECO:0000250" key="1">
    <source>
        <dbReference type="UniProtKB" id="Q9D4G2"/>
    </source>
</evidence>
<evidence type="ECO:0000255" key="2"/>
<evidence type="ECO:0000269" key="3">
    <source>
    </source>
</evidence>
<evidence type="ECO:0000269" key="4">
    <source>
    </source>
</evidence>
<evidence type="ECO:0000269" key="5">
    <source>
    </source>
</evidence>
<evidence type="ECO:0000269" key="6">
    <source>
    </source>
</evidence>
<evidence type="ECO:0000303" key="7">
    <source>
    </source>
</evidence>
<evidence type="ECO:0000305" key="8"/>
<evidence type="ECO:0000312" key="9">
    <source>
        <dbReference type="HGNC" id="HGNC:5226"/>
    </source>
</evidence>
<evidence type="ECO:0007829" key="10">
    <source>
        <dbReference type="PDB" id="7LDG"/>
    </source>
</evidence>
<evidence type="ECO:0007829" key="11">
    <source>
        <dbReference type="PDB" id="8A50"/>
    </source>
</evidence>
<keyword id="KW-0002">3D-structure</keyword>
<keyword id="KW-0025">Alternative splicing</keyword>
<keyword id="KW-0158">Chromosome</keyword>
<keyword id="KW-0175">Coiled coil</keyword>
<keyword id="KW-0963">Cytoplasm</keyword>
<keyword id="KW-0225">Disease variant</keyword>
<keyword id="KW-1066">Premature ovarian failure</keyword>
<keyword id="KW-1267">Proteomics identification</keyword>
<keyword id="KW-1185">Reference proteome</keyword>
<keyword id="KW-0832">Ubl conjugation</keyword>
<name>HSF2B_HUMAN</name>
<gene>
    <name evidence="9" type="primary">HSF2BP</name>
    <name evidence="1" type="synonym">MEILB2</name>
</gene>
<organism>
    <name type="scientific">Homo sapiens</name>
    <name type="common">Human</name>
    <dbReference type="NCBI Taxonomy" id="9606"/>
    <lineage>
        <taxon>Eukaryota</taxon>
        <taxon>Metazoa</taxon>
        <taxon>Chordata</taxon>
        <taxon>Craniata</taxon>
        <taxon>Vertebrata</taxon>
        <taxon>Euteleostomi</taxon>
        <taxon>Mammalia</taxon>
        <taxon>Eutheria</taxon>
        <taxon>Euarchontoglires</taxon>
        <taxon>Primates</taxon>
        <taxon>Haplorrhini</taxon>
        <taxon>Catarrhini</taxon>
        <taxon>Hominidae</taxon>
        <taxon>Homo</taxon>
    </lineage>
</organism>